<keyword id="KW-0002">3D-structure</keyword>
<keyword id="KW-0009">Actin-binding</keyword>
<keyword id="KW-0877">Alternative promoter usage</keyword>
<keyword id="KW-0025">Alternative splicing</keyword>
<keyword id="KW-0106">Calcium</keyword>
<keyword id="KW-0130">Cell adhesion</keyword>
<keyword id="KW-0965">Cell junction</keyword>
<keyword id="KW-1003">Cell membrane</keyword>
<keyword id="KW-0966">Cell projection</keyword>
<keyword id="KW-0175">Coiled coil</keyword>
<keyword id="KW-0963">Cytoplasm</keyword>
<keyword id="KW-0206">Cytoskeleton</keyword>
<keyword id="KW-0256">Endoplasmic reticulum</keyword>
<keyword id="KW-0263">Epidermolysis bullosa</keyword>
<keyword id="KW-0403">Intermediate filament</keyword>
<keyword id="KW-1017">Isopeptide bond</keyword>
<keyword id="KW-0449">Lipoprotein</keyword>
<keyword id="KW-0472">Membrane</keyword>
<keyword id="KW-0479">Metal-binding</keyword>
<keyword id="KW-0493">Microtubule</keyword>
<keyword id="KW-0514">Muscle protein</keyword>
<keyword id="KW-0523">Neurodegeneration</keyword>
<keyword id="KW-0622">Neuropathy</keyword>
<keyword id="KW-0539">Nucleus</keyword>
<keyword id="KW-0564">Palmitate</keyword>
<keyword id="KW-0597">Phosphoprotein</keyword>
<keyword id="KW-1267">Proteomics identification</keyword>
<keyword id="KW-1185">Reference proteome</keyword>
<keyword id="KW-0677">Repeat</keyword>
<keyword id="KW-0728">SH3 domain</keyword>
<keyword id="KW-0812">Transmembrane</keyword>
<keyword id="KW-0832">Ubl conjugation</keyword>
<reference key="1">
    <citation type="journal article" date="1991" name="J. Biol. Chem.">
        <title>Human bullous pemphigoid antigen (BPAG1). Amino acid sequences deduced from cloned cDNAs predict biologically important peptide segments and protein domains.</title>
        <authorList>
            <person name="Sawamura D."/>
            <person name="Li K."/>
            <person name="Chu M.-L."/>
            <person name="Uitto J."/>
        </authorList>
    </citation>
    <scope>NUCLEOTIDE SEQUENCE [MRNA] (ISOFORM 3)</scope>
    <scope>DISEASE</scope>
    <source>
        <tissue>Keratinocyte</tissue>
    </source>
</reference>
<reference key="2">
    <citation type="journal article" date="1993" name="J. Invest. Dermatol.">
        <title>Cloning of the 5' mRNA for the 230-kD bullous pemphigoid antigen by rapid amplification of cDNA ends.</title>
        <authorList>
            <person name="Elgart G.W."/>
            <person name="Stanley J.R."/>
        </authorList>
    </citation>
    <scope>NUCLEOTIDE SEQUENCE [MRNA] (ISOFORM 3)</scope>
    <source>
        <tissue>Keratinocyte</tissue>
    </source>
</reference>
<reference key="3">
    <citation type="journal article" date="2002" name="J. Biol. Chem.">
        <title>Novel alternative splicings of BPAG1 (bullous pemphigoid antigen 1) including the domain structure closely related to MACF (microtubule actin cross-linking factor).</title>
        <authorList>
            <person name="Okumura M."/>
            <person name="Yamakawa H."/>
            <person name="Ohara O."/>
            <person name="Owaribe K."/>
        </authorList>
    </citation>
    <scope>NUCLEOTIDE SEQUENCE [MRNA] (ISOFORM 2)</scope>
    <scope>NUCLEOTIDE SEQUENCE [MRNA] OF 1-3386 (ISOFORM 4)</scope>
    <scope>SUBCELLULAR LOCATION</scope>
    <scope>TISSUE SPECIFICITY</scope>
    <source>
        <tissue>Keratinocyte</tissue>
    </source>
</reference>
<reference key="4">
    <citation type="journal article" date="2004" name="Nat. Genet.">
        <title>Complete sequencing and characterization of 21,243 full-length human cDNAs.</title>
        <authorList>
            <person name="Ota T."/>
            <person name="Suzuki Y."/>
            <person name="Nishikawa T."/>
            <person name="Otsuki T."/>
            <person name="Sugiyama T."/>
            <person name="Irie R."/>
            <person name="Wakamatsu A."/>
            <person name="Hayashi K."/>
            <person name="Sato H."/>
            <person name="Nagai K."/>
            <person name="Kimura K."/>
            <person name="Makita H."/>
            <person name="Sekine M."/>
            <person name="Obayashi M."/>
            <person name="Nishi T."/>
            <person name="Shibahara T."/>
            <person name="Tanaka T."/>
            <person name="Ishii S."/>
            <person name="Yamamoto J."/>
            <person name="Saito K."/>
            <person name="Kawai Y."/>
            <person name="Isono Y."/>
            <person name="Nakamura Y."/>
            <person name="Nagahari K."/>
            <person name="Murakami K."/>
            <person name="Yasuda T."/>
            <person name="Iwayanagi T."/>
            <person name="Wagatsuma M."/>
            <person name="Shiratori A."/>
            <person name="Sudo H."/>
            <person name="Hosoiri T."/>
            <person name="Kaku Y."/>
            <person name="Kodaira H."/>
            <person name="Kondo H."/>
            <person name="Sugawara M."/>
            <person name="Takahashi M."/>
            <person name="Kanda K."/>
            <person name="Yokoi T."/>
            <person name="Furuya T."/>
            <person name="Kikkawa E."/>
            <person name="Omura Y."/>
            <person name="Abe K."/>
            <person name="Kamihara K."/>
            <person name="Katsuta N."/>
            <person name="Sato K."/>
            <person name="Tanikawa M."/>
            <person name="Yamazaki M."/>
            <person name="Ninomiya K."/>
            <person name="Ishibashi T."/>
            <person name="Yamashita H."/>
            <person name="Murakawa K."/>
            <person name="Fujimori K."/>
            <person name="Tanai H."/>
            <person name="Kimata M."/>
            <person name="Watanabe M."/>
            <person name="Hiraoka S."/>
            <person name="Chiba Y."/>
            <person name="Ishida S."/>
            <person name="Ono Y."/>
            <person name="Takiguchi S."/>
            <person name="Watanabe S."/>
            <person name="Yosida M."/>
            <person name="Hotuta T."/>
            <person name="Kusano J."/>
            <person name="Kanehori K."/>
            <person name="Takahashi-Fujii A."/>
            <person name="Hara H."/>
            <person name="Tanase T.-O."/>
            <person name="Nomura Y."/>
            <person name="Togiya S."/>
            <person name="Komai F."/>
            <person name="Hara R."/>
            <person name="Takeuchi K."/>
            <person name="Arita M."/>
            <person name="Imose N."/>
            <person name="Musashino K."/>
            <person name="Yuuki H."/>
            <person name="Oshima A."/>
            <person name="Sasaki N."/>
            <person name="Aotsuka S."/>
            <person name="Yoshikawa Y."/>
            <person name="Matsunawa H."/>
            <person name="Ichihara T."/>
            <person name="Shiohata N."/>
            <person name="Sano S."/>
            <person name="Moriya S."/>
            <person name="Momiyama H."/>
            <person name="Satoh N."/>
            <person name="Takami S."/>
            <person name="Terashima Y."/>
            <person name="Suzuki O."/>
            <person name="Nakagawa S."/>
            <person name="Senoh A."/>
            <person name="Mizoguchi H."/>
            <person name="Goto Y."/>
            <person name="Shimizu F."/>
            <person name="Wakebe H."/>
            <person name="Hishigaki H."/>
            <person name="Watanabe T."/>
            <person name="Sugiyama A."/>
            <person name="Takemoto M."/>
            <person name="Kawakami B."/>
            <person name="Yamazaki M."/>
            <person name="Watanabe K."/>
            <person name="Kumagai A."/>
            <person name="Itakura S."/>
            <person name="Fukuzumi Y."/>
            <person name="Fujimori Y."/>
            <person name="Komiyama M."/>
            <person name="Tashiro H."/>
            <person name="Tanigami A."/>
            <person name="Fujiwara T."/>
            <person name="Ono T."/>
            <person name="Yamada K."/>
            <person name="Fujii Y."/>
            <person name="Ozaki K."/>
            <person name="Hirao M."/>
            <person name="Ohmori Y."/>
            <person name="Kawabata A."/>
            <person name="Hikiji T."/>
            <person name="Kobatake N."/>
            <person name="Inagaki H."/>
            <person name="Ikema Y."/>
            <person name="Okamoto S."/>
            <person name="Okitani R."/>
            <person name="Kawakami T."/>
            <person name="Noguchi S."/>
            <person name="Itoh T."/>
            <person name="Shigeta K."/>
            <person name="Senba T."/>
            <person name="Matsumura K."/>
            <person name="Nakajima Y."/>
            <person name="Mizuno T."/>
            <person name="Morinaga M."/>
            <person name="Sasaki M."/>
            <person name="Togashi T."/>
            <person name="Oyama M."/>
            <person name="Hata H."/>
            <person name="Watanabe M."/>
            <person name="Komatsu T."/>
            <person name="Mizushima-Sugano J."/>
            <person name="Satoh T."/>
            <person name="Shirai Y."/>
            <person name="Takahashi Y."/>
            <person name="Nakagawa K."/>
            <person name="Okumura K."/>
            <person name="Nagase T."/>
            <person name="Nomura N."/>
            <person name="Kikuchi H."/>
            <person name="Masuho Y."/>
            <person name="Yamashita R."/>
            <person name="Nakai K."/>
            <person name="Yada T."/>
            <person name="Nakamura Y."/>
            <person name="Ohara O."/>
            <person name="Isogai T."/>
            <person name="Sugano S."/>
        </authorList>
    </citation>
    <scope>NUCLEOTIDE SEQUENCE [LARGE SCALE MRNA] (ISOFORM 8)</scope>
    <scope>NUCLEOTIDE SEQUENCE [LARGE SCALE MRNA] OF 4114-6568 (ISOFORM 1)</scope>
    <scope>VARIANT ALA-5138</scope>
    <source>
        <tissue>Brain</tissue>
        <tissue>Hippocampus</tissue>
        <tissue>Placenta</tissue>
        <tissue>Tongue</tissue>
    </source>
</reference>
<reference key="5">
    <citation type="journal article" date="2003" name="Nature">
        <title>The DNA sequence and analysis of human chromosome 6.</title>
        <authorList>
            <person name="Mungall A.J."/>
            <person name="Palmer S.A."/>
            <person name="Sims S.K."/>
            <person name="Edwards C.A."/>
            <person name="Ashurst J.L."/>
            <person name="Wilming L."/>
            <person name="Jones M.C."/>
            <person name="Horton R."/>
            <person name="Hunt S.E."/>
            <person name="Scott C.E."/>
            <person name="Gilbert J.G.R."/>
            <person name="Clamp M.E."/>
            <person name="Bethel G."/>
            <person name="Milne S."/>
            <person name="Ainscough R."/>
            <person name="Almeida J.P."/>
            <person name="Ambrose K.D."/>
            <person name="Andrews T.D."/>
            <person name="Ashwell R.I.S."/>
            <person name="Babbage A.K."/>
            <person name="Bagguley C.L."/>
            <person name="Bailey J."/>
            <person name="Banerjee R."/>
            <person name="Barker D.J."/>
            <person name="Barlow K.F."/>
            <person name="Bates K."/>
            <person name="Beare D.M."/>
            <person name="Beasley H."/>
            <person name="Beasley O."/>
            <person name="Bird C.P."/>
            <person name="Blakey S.E."/>
            <person name="Bray-Allen S."/>
            <person name="Brook J."/>
            <person name="Brown A.J."/>
            <person name="Brown J.Y."/>
            <person name="Burford D.C."/>
            <person name="Burrill W."/>
            <person name="Burton J."/>
            <person name="Carder C."/>
            <person name="Carter N.P."/>
            <person name="Chapman J.C."/>
            <person name="Clark S.Y."/>
            <person name="Clark G."/>
            <person name="Clee C.M."/>
            <person name="Clegg S."/>
            <person name="Cobley V."/>
            <person name="Collier R.E."/>
            <person name="Collins J.E."/>
            <person name="Colman L.K."/>
            <person name="Corby N.R."/>
            <person name="Coville G.J."/>
            <person name="Culley K.M."/>
            <person name="Dhami P."/>
            <person name="Davies J."/>
            <person name="Dunn M."/>
            <person name="Earthrowl M.E."/>
            <person name="Ellington A.E."/>
            <person name="Evans K.A."/>
            <person name="Faulkner L."/>
            <person name="Francis M.D."/>
            <person name="Frankish A."/>
            <person name="Frankland J."/>
            <person name="French L."/>
            <person name="Garner P."/>
            <person name="Garnett J."/>
            <person name="Ghori M.J."/>
            <person name="Gilby L.M."/>
            <person name="Gillson C.J."/>
            <person name="Glithero R.J."/>
            <person name="Grafham D.V."/>
            <person name="Grant M."/>
            <person name="Gribble S."/>
            <person name="Griffiths C."/>
            <person name="Griffiths M.N.D."/>
            <person name="Hall R."/>
            <person name="Halls K.S."/>
            <person name="Hammond S."/>
            <person name="Harley J.L."/>
            <person name="Hart E.A."/>
            <person name="Heath P.D."/>
            <person name="Heathcott R."/>
            <person name="Holmes S.J."/>
            <person name="Howden P.J."/>
            <person name="Howe K.L."/>
            <person name="Howell G.R."/>
            <person name="Huckle E."/>
            <person name="Humphray S.J."/>
            <person name="Humphries M.D."/>
            <person name="Hunt A.R."/>
            <person name="Johnson C.M."/>
            <person name="Joy A.A."/>
            <person name="Kay M."/>
            <person name="Keenan S.J."/>
            <person name="Kimberley A.M."/>
            <person name="King A."/>
            <person name="Laird G.K."/>
            <person name="Langford C."/>
            <person name="Lawlor S."/>
            <person name="Leongamornlert D.A."/>
            <person name="Leversha M."/>
            <person name="Lloyd C.R."/>
            <person name="Lloyd D.M."/>
            <person name="Loveland J.E."/>
            <person name="Lovell J."/>
            <person name="Martin S."/>
            <person name="Mashreghi-Mohammadi M."/>
            <person name="Maslen G.L."/>
            <person name="Matthews L."/>
            <person name="McCann O.T."/>
            <person name="McLaren S.J."/>
            <person name="McLay K."/>
            <person name="McMurray A."/>
            <person name="Moore M.J.F."/>
            <person name="Mullikin J.C."/>
            <person name="Niblett D."/>
            <person name="Nickerson T."/>
            <person name="Novik K.L."/>
            <person name="Oliver K."/>
            <person name="Overton-Larty E.K."/>
            <person name="Parker A."/>
            <person name="Patel R."/>
            <person name="Pearce A.V."/>
            <person name="Peck A.I."/>
            <person name="Phillimore B.J.C.T."/>
            <person name="Phillips S."/>
            <person name="Plumb R.W."/>
            <person name="Porter K.M."/>
            <person name="Ramsey Y."/>
            <person name="Ranby S.A."/>
            <person name="Rice C.M."/>
            <person name="Ross M.T."/>
            <person name="Searle S.M."/>
            <person name="Sehra H.K."/>
            <person name="Sheridan E."/>
            <person name="Skuce C.D."/>
            <person name="Smith S."/>
            <person name="Smith M."/>
            <person name="Spraggon L."/>
            <person name="Squares S.L."/>
            <person name="Steward C.A."/>
            <person name="Sycamore N."/>
            <person name="Tamlyn-Hall G."/>
            <person name="Tester J."/>
            <person name="Theaker A.J."/>
            <person name="Thomas D.W."/>
            <person name="Thorpe A."/>
            <person name="Tracey A."/>
            <person name="Tromans A."/>
            <person name="Tubby B."/>
            <person name="Wall M."/>
            <person name="Wallis J.M."/>
            <person name="West A.P."/>
            <person name="White S.S."/>
            <person name="Whitehead S.L."/>
            <person name="Whittaker H."/>
            <person name="Wild A."/>
            <person name="Willey D.J."/>
            <person name="Wilmer T.E."/>
            <person name="Wood J.M."/>
            <person name="Wray P.W."/>
            <person name="Wyatt J.C."/>
            <person name="Young L."/>
            <person name="Younger R.M."/>
            <person name="Bentley D.R."/>
            <person name="Coulson A."/>
            <person name="Durbin R.M."/>
            <person name="Hubbard T."/>
            <person name="Sulston J.E."/>
            <person name="Dunham I."/>
            <person name="Rogers J."/>
            <person name="Beck S."/>
        </authorList>
    </citation>
    <scope>NUCLEOTIDE SEQUENCE [LARGE SCALE GENOMIC DNA]</scope>
</reference>
<reference key="6">
    <citation type="journal article" date="2004" name="Genome Res.">
        <title>The status, quality, and expansion of the NIH full-length cDNA project: the Mammalian Gene Collection (MGC).</title>
        <authorList>
            <consortium name="The MGC Project Team"/>
        </authorList>
    </citation>
    <scope>NUCLEOTIDE SEQUENCE [LARGE SCALE MRNA] (ISOFORM 5)</scope>
    <source>
        <tissue>Duodenum</tissue>
    </source>
</reference>
<reference key="7">
    <citation type="journal article" date="1995" name="Genomics">
        <title>Cloning and characterization of the neural isoforms of human dystonin.</title>
        <authorList>
            <person name="Brown A."/>
            <person name="Dalpe G."/>
            <person name="Mathieu M."/>
            <person name="Kothary R."/>
        </authorList>
    </citation>
    <scope>NUCLEOTIDE SEQUENCE [MRNA] OF 1-461 (ISOFORM 1)</scope>
    <scope>NUCLEOTIDE SEQUENCE [MRNA] OF 1-46 (ISOFORM 6)</scope>
    <source>
        <tissue>Fetal brain</tissue>
        <tissue>Retina</tissue>
    </source>
</reference>
<reference key="8">
    <citation type="journal article" date="1999" name="Cell">
        <title>Integrators of the cytoskeleton that stabilize microtubules.</title>
        <authorList>
            <person name="Yang Y."/>
            <person name="Bauer C."/>
            <person name="Strasser G."/>
            <person name="Wollman R."/>
            <person name="Julien J.P."/>
            <person name="Fuchs E."/>
        </authorList>
    </citation>
    <scope>NUCLEOTIDE SEQUENCE [MRNA] OF 1-188 (ISOFORM 7)</scope>
    <scope>ALTERNATIVE SPLICING (ISOFORMS 6 AND 7)</scope>
    <scope>FUNCTION OF ISOFORMS 6 AND 7</scope>
    <scope>SUBCELLULAR LOCATION (ISOFORMS 6 AND 7)</scope>
    <source>
        <tissue>Fetal brain</tissue>
    </source>
</reference>
<reference key="9">
    <citation type="submission" date="2001-04" db="EMBL/GenBank/DDBJ databases">
        <authorList>
            <person name="Geerts D."/>
            <person name="Sonnenberg A."/>
        </authorList>
    </citation>
    <scope>NUCLEOTIDE SEQUENCE [MRNA] OF 208-308 (ISOFORM 1)</scope>
    <source>
        <tissue>Pineal gland</tissue>
    </source>
</reference>
<reference key="10">
    <citation type="journal article" date="1991" name="J. Biol. Chem.">
        <title>Comparison of molecularly cloned bullous pemphigoid antigen to desmoplakin I confirms that they define a new family of cell adhesion junction plaque proteins.</title>
        <authorList>
            <person name="Tanaka T."/>
            <person name="Parry D.A.D."/>
            <person name="Klaus-Kovtun V."/>
            <person name="Steinert P.M."/>
            <person name="Stanley J.R."/>
        </authorList>
    </citation>
    <scope>NUCLEOTIDE SEQUENCE [MRNA] OF 881-7570 (ISOFORM 3)</scope>
    <source>
        <tissue>Keratinocyte</tissue>
    </source>
</reference>
<reference key="11">
    <citation type="journal article" date="1998" name="DNA Res.">
        <title>Prediction of the coding sequences of unidentified human genes. XI. The complete sequences of 100 new cDNA clones from brain which code for large proteins in vitro.</title>
        <authorList>
            <person name="Nagase T."/>
            <person name="Ishikawa K."/>
            <person name="Suyama M."/>
            <person name="Kikuno R."/>
            <person name="Miyajima N."/>
            <person name="Tanaka A."/>
            <person name="Kotani H."/>
            <person name="Nomura N."/>
            <person name="Ohara O."/>
        </authorList>
    </citation>
    <scope>NUCLEOTIDE SEQUENCE [LARGE SCALE MRNA] OF 5947-7570 (ISOFORM 2)</scope>
    <source>
        <tissue>Brain</tissue>
    </source>
</reference>
<reference key="12">
    <citation type="journal article" date="2002" name="DNA Res.">
        <title>Construction of expression-ready cDNA clones for KIAA genes: manual curation of 330 KIAA cDNA clones.</title>
        <authorList>
            <person name="Nakajima D."/>
            <person name="Okazaki N."/>
            <person name="Yamakawa H."/>
            <person name="Kikuno R."/>
            <person name="Ohara O."/>
            <person name="Nagase T."/>
        </authorList>
    </citation>
    <scope>SEQUENCE REVISION</scope>
</reference>
<reference key="13">
    <citation type="journal article" date="1988" name="J. Clin. Invest.">
        <title>Isolation of complementary DNA for bullous pemphigoid antigen by use of patients' autoantibodies.</title>
        <authorList>
            <person name="Stanley J.R."/>
            <person name="Tanaka T."/>
            <person name="Mueller S."/>
            <person name="Klaus-Kovtun V."/>
            <person name="Roop D."/>
        </authorList>
    </citation>
    <scope>PARTIAL NUCLEOTIDE SEQUENCE [MRNA] (ISOFORM 3)</scope>
    <source>
        <tissue>Keratinocyte</tissue>
    </source>
</reference>
<reference key="14">
    <citation type="journal article" date="1990" name="Differentiation">
        <title>The hemidesmosomal plaque. I. Characterization of a major constituent protein as a differentiation marker for certain forms of epithelia.</title>
        <authorList>
            <person name="Owaribe K."/>
            <person name="Kartenbeck J."/>
            <person name="Stumpp S."/>
            <person name="Magin T.M."/>
            <person name="Krieg T."/>
            <person name="Diaz L.A."/>
            <person name="Franke W.W."/>
        </authorList>
    </citation>
    <scope>PARTIAL NUCLEOTIDE SEQUENCE [MRNA] (ISOFORM 3)</scope>
</reference>
<reference key="15">
    <citation type="journal article" date="1994" name="Biochem. J.">
        <title>Identification of a second protein product of the gene encoding a human epidermal autoantigen.</title>
        <authorList>
            <person name="Hopkinson S.B."/>
            <person name="Jones J.C."/>
        </authorList>
    </citation>
    <scope>PARTIAL NUCLEOTIDE SEQUENCE [GENOMIC DNA]</scope>
    <scope>ALTERNATIVE SPLICING (ISOFORM 3)</scope>
</reference>
<reference key="16">
    <citation type="journal article" date="1996" name="Cell">
        <title>An essential cytoskeletal linker protein connecting actin microfilaments to intermediate filaments.</title>
        <authorList>
            <person name="Yang Y."/>
            <person name="Dowling J."/>
            <person name="Yu Q.C."/>
            <person name="Kouklis P."/>
            <person name="Cleveland D.W."/>
            <person name="Fuchs E."/>
        </authorList>
    </citation>
    <scope>ALTERNATIVE SPLICING (ISOFORMS 3 AND 6)</scope>
    <scope>TISSUE SPECIFICITY</scope>
</reference>
<reference key="17">
    <citation type="journal article" date="2000" name="Mol. Biol. Cell">
        <title>The N terminus of the transmembrane protein BP180 interacts with the N-terminal domain of BP230, thereby mediating keratin cytoskeleton anchorage to the cell surface at the site of the hemidesmosome.</title>
        <authorList>
            <person name="Hopkinson S.B."/>
            <person name="Jones J.C."/>
        </authorList>
    </citation>
    <scope>ALTERNATIVE SPLICING (ISOFORM 3)</scope>
    <scope>INTERACTION WITH COL17A1 AND ITGB4</scope>
</reference>
<reference key="18">
    <citation type="journal article" date="1996" name="J. Biol. Chem.">
        <title>Structural analysis of the predicted coiled-coil rod domain of the cytoplasmic bullous pemphigoid antigen (BPAG1). Empirical localization of the N-terminal globular domain-rod boundary.</title>
        <authorList>
            <person name="Tang H.-Y."/>
            <person name="Chaffotte A.-F."/>
            <person name="Thacher S.M."/>
        </authorList>
    </citation>
    <scope>DOMAINS</scope>
</reference>
<reference key="19">
    <citation type="journal article" date="2001" name="J. Biol. Chem.">
        <title>The hemidesmosomal protein bullous pemphigoid antigen 1 and the integrin beta 4 subunit bind to ERBIN. Molecular cloning of multiple alternative splice variants of ERBIN and analysis of their tissue expression.</title>
        <authorList>
            <person name="Favre B."/>
            <person name="Fontao L."/>
            <person name="Koster J."/>
            <person name="Shafaatian R."/>
            <person name="Jaunin F."/>
            <person name="Saurat J.-H."/>
            <person name="Sonnenberg A."/>
            <person name="Borradori L."/>
        </authorList>
    </citation>
    <scope>INTERACTION WITH ITGB4 AND ERBIN</scope>
</reference>
<reference key="20">
    <citation type="journal article" date="2003" name="J. Cell Biol.">
        <title>BPAG1n4 is essential for retrograde axonal transport in sensory neurons.</title>
        <authorList>
            <person name="Liu J.J."/>
            <person name="Ding J."/>
            <person name="Kowal A.S."/>
            <person name="Nardine T."/>
            <person name="Allen E."/>
            <person name="Delcroix J.D."/>
            <person name="Wu C."/>
            <person name="Mobley W."/>
            <person name="Fuchs E."/>
            <person name="Yang Y."/>
        </authorList>
    </citation>
    <scope>ALTERNATIVE SPLICING (ISOFORM 9)</scope>
</reference>
<reference key="21">
    <citation type="journal article" date="2003" name="J. Cell Sci.">
        <title>Analysis of the interactions between BP180, BP230, plectin and the integrin alpha6beta4 important for hemidesmosome assembly.</title>
        <authorList>
            <person name="Koster J."/>
            <person name="Geerts D."/>
            <person name="Favre B."/>
            <person name="Borradori L."/>
            <person name="Sonnenberg A."/>
        </authorList>
    </citation>
    <scope>ALTERNATIVE SPLICING (ISOFORM 3)</scope>
    <scope>FUNCTION OF ISOFORM 3</scope>
    <scope>INTERACTION WITH COL17A1 AND ITGB4</scope>
    <scope>SUBCELLULAR LOCATION (ISOFORM 3)</scope>
</reference>
<reference key="22">
    <citation type="journal article" date="2003" name="Mol. Biol. Cell">
        <title>Interaction of the bullous pemphigoid antigen 1 (BP230) and desmoplakin with intermediate filaments is mediated by distinct sequences within their COOH terminus.</title>
        <authorList>
            <person name="Fontao L."/>
            <person name="Favre B."/>
            <person name="Riou S."/>
            <person name="Geerts D."/>
            <person name="Jaunin F."/>
            <person name="Saurat J.H."/>
            <person name="Green K.J."/>
            <person name="Sonnenberg A."/>
            <person name="Borradori L."/>
        </authorList>
    </citation>
    <scope>ALTERNATIVE SPLICING (ISOFORM 3)</scope>
    <scope>ASSOCIATION WITH KERATIN FILAMENTS</scope>
    <scope>SUBCELLULAR LOCATION (ISOFORM 3)</scope>
</reference>
<reference key="23">
    <citation type="journal article" date="2008" name="Proc. Natl. Acad. Sci. U.S.A.">
        <title>A quantitative atlas of mitotic phosphorylation.</title>
        <authorList>
            <person name="Dephoure N."/>
            <person name="Zhou C."/>
            <person name="Villen J."/>
            <person name="Beausoleil S.A."/>
            <person name="Bakalarski C.E."/>
            <person name="Elledge S.J."/>
            <person name="Gygi S.P."/>
        </authorList>
    </citation>
    <scope>PHOSPHORYLATION [LARGE SCALE ANALYSIS] AT SER-7432</scope>
    <scope>IDENTIFICATION BY MASS SPECTROMETRY [LARGE SCALE ANALYSIS]</scope>
    <source>
        <tissue>Cervix carcinoma</tissue>
    </source>
</reference>
<reference key="24">
    <citation type="journal article" date="2009" name="Mol. Biol. Cell">
        <title>BPAG1e maintains keratinocyte polarity through beta4 integrin-mediated modulation of Rac1 and cofilin activities.</title>
        <authorList>
            <person name="Hamill K.J."/>
            <person name="Hopkinson S.B."/>
            <person name="DeBiase P."/>
            <person name="Jones J.C."/>
        </authorList>
    </citation>
    <scope>ALTERNATIVE SPLICING (ISOFORM 3)</scope>
    <scope>FUNCTION OF ISOFORM 3</scope>
    <scope>SUBCELLULAR LOCATION (ISOFORM 3)</scope>
</reference>
<reference key="25">
    <citation type="journal article" date="2010" name="Exp. Cell Res.">
        <title>BPAG1 isoform-b: complex distribution pattern in striated and heart muscle and association with plectin and alpha-actinin.</title>
        <authorList>
            <person name="Steiner-Champliaud M.F."/>
            <person name="Schneider Y."/>
            <person name="Favre B."/>
            <person name="Paulhe F."/>
            <person name="Praetzel-Wunder S."/>
            <person name="Faulkner G."/>
            <person name="Konieczny P."/>
            <person name="Raith M."/>
            <person name="Wiche G."/>
            <person name="Adebola A."/>
            <person name="Liem R.K."/>
            <person name="Langbein L."/>
            <person name="Sonnenberg A."/>
            <person name="Fontao L."/>
            <person name="Borradori L."/>
        </authorList>
    </citation>
    <scope>ALTERNATIVE SPLICING (ISOFORM 1)</scope>
    <scope>HOMODIMERIZATION</scope>
    <scope>INTERACTION WITH ACTN2 AND PLEC</scope>
    <scope>SUBCELLULAR LOCATION</scope>
    <scope>TISSUE SPECIFICITY</scope>
</reference>
<reference key="26">
    <citation type="journal article" date="2010" name="J. Invest. Dermatol.">
        <title>A homozygous nonsense mutation within the dystonin gene coding for the coiled-coil domain of the epithelial isoform of BPAG1 underlies a new subtype of autosomal recessive epidermolysis bullosa simplex.</title>
        <authorList>
            <person name="Groves R.W."/>
            <person name="Liu L."/>
            <person name="Dopping-Hepenstal P.J."/>
            <person name="Markus H.S."/>
            <person name="Lovell P.A."/>
            <person name="Ozoemena L."/>
            <person name="Lai-Cheong J.E."/>
            <person name="Gawler J."/>
            <person name="Owaribe K."/>
            <person name="Hashimoto T."/>
            <person name="Mellerio J.E."/>
            <person name="Mee J.B."/>
            <person name="McGrath J.A."/>
        </authorList>
    </citation>
    <scope>INVOLVEMENT IN EBS3</scope>
</reference>
<reference key="27">
    <citation type="journal article" date="2011" name="BMC Syst. Biol.">
        <title>Initial characterization of the human central proteome.</title>
        <authorList>
            <person name="Burkard T.R."/>
            <person name="Planyavsky M."/>
            <person name="Kaupe I."/>
            <person name="Breitwieser F.P."/>
            <person name="Buerckstuemmer T."/>
            <person name="Bennett K.L."/>
            <person name="Superti-Furga G."/>
            <person name="Colinge J."/>
        </authorList>
    </citation>
    <scope>IDENTIFICATION BY MASS SPECTROMETRY [LARGE SCALE ANALYSIS]</scope>
</reference>
<reference key="28">
    <citation type="journal article" date="2011" name="Sci. Signal.">
        <title>System-wide temporal characterization of the proteome and phosphoproteome of human embryonic stem cell differentiation.</title>
        <authorList>
            <person name="Rigbolt K.T."/>
            <person name="Prokhorova T.A."/>
            <person name="Akimov V."/>
            <person name="Henningsen J."/>
            <person name="Johansen P.T."/>
            <person name="Kratchmarova I."/>
            <person name="Kassem M."/>
            <person name="Mann M."/>
            <person name="Olsen J.V."/>
            <person name="Blagoev B."/>
        </authorList>
    </citation>
    <scope>PHOSPHORYLATION [LARGE SCALE ANALYSIS] AT SER-2919</scope>
    <scope>IDENTIFICATION BY MASS SPECTROMETRY [LARGE SCALE ANALYSIS]</scope>
</reference>
<reference key="29">
    <citation type="journal article" date="2012" name="Ann. Neurol.">
        <title>Hereditary sensory autonomic neuropathy caused by a mutation in dystonin.</title>
        <authorList>
            <person name="Edvardson S."/>
            <person name="Cinnamon Y."/>
            <person name="Jalas C."/>
            <person name="Shaag A."/>
            <person name="Maayan C."/>
            <person name="Axelrod F.B."/>
            <person name="Elpeleg O."/>
        </authorList>
    </citation>
    <scope>INVOLVEMENT IN HSAN6</scope>
</reference>
<reference key="30">
    <citation type="journal article" date="2012" name="J. Invest. Dermatol.">
        <title>Autosomal recessive epidermolysis bullosa simplex due to loss of BPAG1-e expression.</title>
        <authorList>
            <person name="Liu L."/>
            <person name="Dopping-Hepenstal P.J."/>
            <person name="Lovell P.A."/>
            <person name="Michael M."/>
            <person name="Horn H."/>
            <person name="Fong K."/>
            <person name="Lai-Cheong J.E."/>
            <person name="Mellerio J.E."/>
            <person name="Parsons M."/>
            <person name="McGrath J.A."/>
        </authorList>
    </citation>
    <scope>INVOLVEMENT IN EBS3</scope>
</reference>
<reference key="31">
    <citation type="journal article" date="2012" name="Mol. Biol. Cell">
        <title>Identification of IGPR-1 as a novel adhesion molecule involved in angiogenesis.</title>
        <authorList>
            <person name="Rahimi N."/>
            <person name="Rezazadeh K."/>
            <person name="Mahoney J.E."/>
            <person name="Hartsough E."/>
            <person name="Meyer R.D."/>
        </authorList>
    </citation>
    <scope>INTERACTION WITH TMIGD2</scope>
</reference>
<reference key="32">
    <citation type="journal article" date="2013" name="J. Proteome Res.">
        <title>Toward a comprehensive characterization of a human cancer cell phosphoproteome.</title>
        <authorList>
            <person name="Zhou H."/>
            <person name="Di Palma S."/>
            <person name="Preisinger C."/>
            <person name="Peng M."/>
            <person name="Polat A.N."/>
            <person name="Heck A.J."/>
            <person name="Mohammed S."/>
        </authorList>
    </citation>
    <scope>PHOSPHORYLATION [LARGE SCALE ANALYSIS] AT SER-3968</scope>
    <scope>PHOSPHORYLATION [LARGE SCALE ANALYSIS] AT SER-135 (ISOFORM 6)</scope>
    <scope>IDENTIFICATION BY MASS SPECTROMETRY [LARGE SCALE ANALYSIS]</scope>
    <source>
        <tissue>Cervix carcinoma</tissue>
        <tissue>Erythroleukemia</tissue>
    </source>
</reference>
<reference key="33">
    <citation type="journal article" date="2014" name="J. Proteomics">
        <title>An enzyme assisted RP-RPLC approach for in-depth analysis of human liver phosphoproteome.</title>
        <authorList>
            <person name="Bian Y."/>
            <person name="Song C."/>
            <person name="Cheng K."/>
            <person name="Dong M."/>
            <person name="Wang F."/>
            <person name="Huang J."/>
            <person name="Sun D."/>
            <person name="Wang L."/>
            <person name="Ye M."/>
            <person name="Zou H."/>
        </authorList>
    </citation>
    <scope>PHOSPHORYLATION [LARGE SCALE ANALYSIS] AT SER-3968</scope>
    <scope>PHOSPHORYLATION [LARGE SCALE ANALYSIS] AT SER-184 (ISOFORM 8)</scope>
    <scope>IDENTIFICATION BY MASS SPECTROMETRY [LARGE SCALE ANALYSIS]</scope>
    <source>
        <tissue>Liver</tissue>
    </source>
</reference>
<reference key="34">
    <citation type="journal article" date="2009" name="Cell">
        <title>An EB1-binding motif acts as a microtubule tip localization signal.</title>
        <authorList>
            <person name="Honnappa S."/>
            <person name="Gouveia S.M."/>
            <person name="Weisbrich A."/>
            <person name="Damberger F.F."/>
            <person name="Bhavesh N.S."/>
            <person name="Jawhari H."/>
            <person name="Grigoriev I."/>
            <person name="van Rijssel F.J."/>
            <person name="Buey R.M."/>
            <person name="Lawera A."/>
            <person name="Jelesarov I."/>
            <person name="Winkler F.K."/>
            <person name="Wuthrich K."/>
            <person name="Akhmanova A."/>
            <person name="Steinmetz M.O."/>
        </authorList>
    </citation>
    <scope>X-RAY CRYSTALLOGRAPHY (2.5 ANGSTROMS) OF 7541-7570 IN COMPLEX WITH MAPRE1</scope>
    <scope>DOMAIN MICROTUBULE TIP LOCALIZATION SIGNAL</scope>
    <scope>MUTAGENESIS OF LYS-7548; SER-7550; ILE-7552; PRO-7553 AND 7557-ARG-LYS-7558</scope>
</reference>
<organism>
    <name type="scientific">Homo sapiens</name>
    <name type="common">Human</name>
    <dbReference type="NCBI Taxonomy" id="9606"/>
    <lineage>
        <taxon>Eukaryota</taxon>
        <taxon>Metazoa</taxon>
        <taxon>Chordata</taxon>
        <taxon>Craniata</taxon>
        <taxon>Vertebrata</taxon>
        <taxon>Euteleostomi</taxon>
        <taxon>Mammalia</taxon>
        <taxon>Eutheria</taxon>
        <taxon>Euarchontoglires</taxon>
        <taxon>Primates</taxon>
        <taxon>Haplorrhini</taxon>
        <taxon>Catarrhini</taxon>
        <taxon>Hominidae</taxon>
        <taxon>Homo</taxon>
    </lineage>
</organism>
<name>DYST_HUMAN</name>
<protein>
    <recommendedName>
        <fullName evidence="32">Dystonin</fullName>
    </recommendedName>
    <alternativeName>
        <fullName>230 kDa bullous pemphigoid antigen</fullName>
    </alternativeName>
    <alternativeName>
        <fullName>230/240 kDa bullous pemphigoid antigen</fullName>
    </alternativeName>
    <alternativeName>
        <fullName>Bullous pemphigoid antigen 1</fullName>
        <shortName>BPA</shortName>
        <shortName>Bullous pemphigoid antigen</shortName>
    </alternativeName>
    <alternativeName>
        <fullName>Dystonia musculorum protein</fullName>
    </alternativeName>
    <alternativeName>
        <fullName>Hemidesmosomal plaque protein</fullName>
    </alternativeName>
</protein>
<accession>Q03001</accession>
<accession>B7Z3H1</accession>
<accession>E7ERU0</accession>
<accession>O94833</accession>
<accession>Q12825</accession>
<accession>Q13266</accession>
<accession>Q13267</accession>
<accession>Q13775</accession>
<accession>Q5TBT0</accession>
<accession>Q5TBT2</accession>
<accession>Q5TF23</accession>
<accession>Q5TF24</accession>
<accession>Q8N1T8</accession>
<accession>Q8N8J3</accession>
<accession>Q8WXK8</accession>
<accession>Q8WXK9</accession>
<accession>Q96AK9</accession>
<accession>Q96DQ5</accession>
<accession>Q96J76</accession>
<accession>Q96QT5</accession>
<accession>Q9H555</accession>
<accession>Q9UGD7</accession>
<accession>Q9UGD8</accession>
<accession>Q9UN10</accession>
<comment type="function">
    <text evidence="2">Cytoskeletal linker protein. Acts as an integrator of intermediate filaments, actin and microtubule cytoskeleton networks. Required for anchoring either intermediate filaments to the actin cytoskeleton in neural and muscle cells or keratin-containing intermediate filaments to hemidesmosomes in epithelial cells. The proteins may self-aggregate to form filaments or a two-dimensional mesh. Regulates the organization and stability of the microtubule network of sensory neurons to allow axonal transport. Mediates docking of the dynein/dynactin motor complex to vesicle cargos for retrograde axonal transport through its interaction with TMEM108 and DCTN1 (By similarity).</text>
</comment>
<comment type="function">
    <molecule>Isoform 3</molecule>
    <text>Plays a structural role in the assembly of hemidesmosomes of epithelial cells; anchors keratin-containing intermediate filaments to the inner plaque of hemidesmosomes. Required for the regulation of keratinocyte polarity and motility; mediates integrin ITGB4 regulation of RAC1 activity.</text>
</comment>
<comment type="function">
    <molecule>Isoform 6</molecule>
    <text evidence="1 8 12 14">Required for bundling actin filaments around the nucleus.</text>
</comment>
<comment type="function">
    <molecule>Isoform 7</molecule>
    <text>Regulates the organization and stability of the microtubule network of sensory neurons to allow axonal transport.</text>
</comment>
<comment type="subunit">
    <text evidence="2 9 10 12 15 16 19">Homodimer. Isoform 1 interacts (via N-terminus) with PLEC (via N-terminus). Interacts with the neuronal intermediate filament protein, PRPH. Interacts with DES. Interacts with SYNE3 (By similarity). Isoform 1 and isoform 6 can homodimerize (via N-terminus). Isoform 1 interacts (via N-terminus) with ACTN2. Isoform 1 interacts (via N-terminus) with PLEC (via N-terminus). Isoform 3 interacts (via N-terminus) with COL17A1 (via cytoplasmic region). Isoform 3 interacts (via N-terminus) with ITGB4 isoform beta-4a (via cytoplasmic region). Isoform 3 interacts (via N-terminus) with ERBIN (via C-terminus). Isoform 3 associates (via C-terminal) with KRT5-KRT14 (via rod region) intermediate filaments of keratins. Interacts with MAPRE1; probably required for targeting to the growing microtubule plus ends. Interacts with TMIGD2. Isoform 9 interacts with TMEM108 (By similarity).</text>
</comment>
<comment type="interaction">
    <interactant intactId="EBI-310758">
        <id>Q03001</id>
    </interactant>
    <interactant intactId="EBI-741243">
        <id>Q9UKG1</id>
        <label>APPL1</label>
    </interactant>
    <organismsDiffer>false</organismsDiffer>
    <experiments>3</experiments>
</comment>
<comment type="interaction">
    <interactant intactId="EBI-310758">
        <id>Q03001</id>
    </interactant>
    <interactant intactId="EBI-529989">
        <id>Q9NRI5</id>
        <label>DISC1</label>
    </interactant>
    <organismsDiffer>false</organismsDiffer>
    <experiments>4</experiments>
</comment>
<comment type="interaction">
    <interactant intactId="EBI-310758">
        <id>Q03001</id>
    </interactant>
    <interactant intactId="EBI-1004115">
        <id>Q15691</id>
        <label>MAPRE1</label>
    </interactant>
    <organismsDiffer>false</organismsDiffer>
    <experiments>7</experiments>
</comment>
<comment type="interaction">
    <interactant intactId="EBI-310758">
        <id>Q03001</id>
    </interactant>
    <interactant intactId="EBI-2027055">
        <id>Q61166</id>
        <label>Mapre1</label>
    </interactant>
    <organismsDiffer>true</organismsDiffer>
    <experiments>4</experiments>
</comment>
<comment type="interaction">
    <interactant intactId="EBI-310758">
        <id>Q03001</id>
    </interactant>
    <interactant intactId="EBI-8826488">
        <id>PRO_0000037946</id>
        <dbReference type="UniProtKB" id="P29991"/>
    </interactant>
    <organismsDiffer>true</organismsDiffer>
    <experiments>4</experiments>
</comment>
<comment type="subcellular location">
    <subcellularLocation>
        <location evidence="11 16">Cytoplasm</location>
        <location evidence="11 16">Cytoskeleton</location>
    </subcellularLocation>
    <subcellularLocation>
        <location evidence="2">Cytoplasm</location>
        <location evidence="2">Cytoskeleton</location>
        <location evidence="2">Stress fiber</location>
    </subcellularLocation>
    <subcellularLocation>
        <location evidence="2">Cell projection</location>
        <location evidence="2">Axon</location>
    </subcellularLocation>
    <text evidence="2">Associates with intermediate filaments, actin and microtubule cytoskeletons. Localizes to actin stress fibers and to actin-rich ruffling at the cortex of cells (By similarity). Associated at the growing distal tip of microtubules.</text>
</comment>
<comment type="subcellular location">
    <molecule>Isoform 1</molecule>
    <subcellularLocation>
        <location evidence="1">Cytoplasm</location>
        <location evidence="1">Cytoskeleton</location>
    </subcellularLocation>
    <subcellularLocation>
        <location>Cytoplasm</location>
        <location>Myofibril</location>
        <location>Sarcomere</location>
        <location>Z line</location>
    </subcellularLocation>
    <subcellularLocation>
        <location evidence="1">Cytoplasm</location>
        <location evidence="1">Myofibril</location>
        <location evidence="1">Sarcomere</location>
        <location evidence="1">H zone</location>
    </subcellularLocation>
    <text evidence="1">Localizes to microtubules and actin microfilaments throughout the cytoplasm and at focal contact attachments at the plasma membrane.</text>
</comment>
<comment type="subcellular location">
    <molecule>Isoform 2</molecule>
    <subcellularLocation>
        <location evidence="1">Cytoplasm</location>
        <location evidence="1">Cytoskeleton</location>
    </subcellularLocation>
    <text evidence="1">Colocalizes both cortical and cytoplasmic actin filaments.</text>
</comment>
<comment type="subcellular location">
    <molecule>Isoform 3</molecule>
    <subcellularLocation>
        <location>Cytoplasm</location>
        <location>Cytoskeleton</location>
    </subcellularLocation>
    <subcellularLocation>
        <location>Cell junction</location>
        <location>Hemidesmosome</location>
    </subcellularLocation>
    <text evidence="1">Localizes to actin and intermediate filaments cytoskeletons (By similarity). Colocalizes with the epidermal KRT5-KRT14 intermediate filaments network of keratins. Colocalizes with ITGB4 at the leading edge of migrating keratinocytes.</text>
</comment>
<comment type="subcellular location">
    <molecule>Isoform 6</molecule>
    <subcellularLocation>
        <location evidence="2">Nucleus</location>
    </subcellularLocation>
    <subcellularLocation>
        <location evidence="8">Nucleus envelope</location>
    </subcellularLocation>
    <subcellularLocation>
        <location evidence="8">Membrane</location>
        <topology evidence="8">Single-pass membrane protein</topology>
    </subcellularLocation>
    <subcellularLocation>
        <location evidence="2">Endoplasmic reticulum membrane</location>
        <topology evidence="2">Single-pass membrane protein</topology>
    </subcellularLocation>
    <subcellularLocation>
        <location evidence="8">Cytoplasm</location>
        <location evidence="8">Cytoskeleton</location>
    </subcellularLocation>
    <subcellularLocation>
        <location evidence="2">Cytoplasm</location>
        <location evidence="2">Cytoskeleton</location>
        <location evidence="2">Stress fiber</location>
    </subcellularLocation>
    <text evidence="2">Localizes to actin and intermediate filaments cytoskeletons. Localizes to central actin stress fibers around the nucleus and is excluded form focal contact sites in myoblast cells. Translocates to the nucleus (By similarity). Associates with actin cytoskeleton in sensory neurons.</text>
</comment>
<comment type="subcellular location">
    <molecule>Isoform 7</molecule>
    <subcellularLocation>
        <location evidence="8">Cytoplasm</location>
        <location evidence="8">Cytoskeleton</location>
    </subcellularLocation>
    <subcellularLocation>
        <location evidence="8">Cell projection</location>
        <location evidence="8">Axon</location>
    </subcellularLocation>
    <subcellularLocation>
        <location evidence="8">Membrane</location>
    </subcellularLocation>
    <text>Associates with axonal microtubules and intermediate filaments, but not with actin cytoskeleton, in sensory neurons.</text>
</comment>
<comment type="subcellular location">
    <molecule>Isoform 8</molecule>
    <subcellularLocation>
        <location evidence="1">Cytoplasm</location>
        <location evidence="1">Cytoskeleton</location>
    </subcellularLocation>
    <subcellularLocation>
        <location evidence="1">Cytoplasm</location>
        <location evidence="1">Cell cortex</location>
    </subcellularLocation>
    <subcellularLocation>
        <location evidence="1">Cell membrane</location>
        <topology evidence="1">Lipid-anchor</topology>
    </subcellularLocation>
</comment>
<comment type="alternative products">
    <event type="alternative promoter"/>
    <event type="alternative splicing"/>
    <isoform>
        <id>Q03001-7</id>
        <name>1</name>
        <name>BPAG1-b</name>
        <sequence type="displayed"/>
    </isoform>
    <isoform>
        <id>Q03001-8</id>
        <name>2</name>
        <name>BPAG1eA</name>
        <name>Dystonin-1</name>
        <name>eA</name>
        <sequence type="described" ref="VSP_041525 VSP_041535 VSP_041539 VSP_041540"/>
    </isoform>
    <isoform>
        <id>Q03001-3</id>
        <name>3</name>
        <name>BPAG1e</name>
        <name>eBPAG1</name>
        <sequence type="described" ref="VSP_041525 VSP_041533 VSP_041534"/>
    </isoform>
    <isoform>
        <id>Q03001-9</id>
        <name>4</name>
        <name>BPAG1eA</name>
        <name>eB</name>
        <sequence type="described" ref="VSP_041525 VSP_041536"/>
    </isoform>
    <isoform>
        <id>Q03001-10</id>
        <name>5</name>
        <sequence type="described" ref="VSP_041524 VSP_041537 VSP_041538"/>
    </isoform>
    <isoform>
        <id>Q03001-11</id>
        <name>6</name>
        <name>BPAG1n1</name>
        <name>BPAG1n2</name>
        <name>Dystonin-2</name>
        <sequence type="described" ref="VSP_041528 VSP_041529"/>
    </isoform>
    <isoform>
        <id>Q03001-12</id>
        <name>7</name>
        <name>BPAG1n3</name>
        <sequence type="described" ref="VSP_041526 VSP_041530"/>
    </isoform>
    <isoform>
        <id>Q03001-13</id>
        <name>8</name>
        <sequence type="described" ref="VSP_041527 VSP_041531 VSP_041532"/>
    </isoform>
    <isoform>
        <id>Q03001-14</id>
        <name>9</name>
        <name evidence="24">BPAG1-a</name>
        <name evidence="24">BAPG1n4</name>
        <sequence type="described" ref="VSP_058835 VSP_058836"/>
    </isoform>
</comment>
<comment type="tissue specificity">
    <text evidence="11 16 21">Isoform 1 is expressed in myoblasts (at protein level). Isoform 3 is expressed in the skin. Isoform 6 is expressed in the brain. Highly expressed in skeletal muscle and cultured keratinocytes.</text>
</comment>
<comment type="domain">
    <text>Its association with epidermal and simple keratins is dependent on the tertiary structure induced by heterodimerization of these intermediate filaments proteins and most likely involves recognition sites located in the rod domain of these keratins.</text>
</comment>
<comment type="domain">
    <text>The microtubule tip localization signal (MtLS) motif; mediates interaction with MAPRE1 and targeting to the growing microtubule plus ends.</text>
</comment>
<comment type="disease" evidence="20">
    <disease id="DI-03461">
        <name>Neuropathy, hereditary sensory and autonomic, 6</name>
        <acronym>HSAN6</acronym>
        <description>A form of hereditary sensory and autonomic neuropathy, a genetically and clinically heterogeneous group of disorders characterized by degeneration of dorsal root and autonomic ganglion cells, and by sensory and/or autonomic abnormalities. HSAN6 is a severe autosomal recessive disorder characterized by neonatal hypotonia, respiratory and feeding difficulties, lack of psychomotor development, and autonomic abnormalities including labile cardiovascular function, lack of corneal reflexes leading to corneal scarring, areflexia, and absent axonal flare response after intradermal histamine injection.</description>
        <dbReference type="MIM" id="614653"/>
    </disease>
    <text>The disease is caused by variants affecting the gene represented in this entry.</text>
</comment>
<comment type="disease" evidence="17 18">
    <disease id="DI-03906">
        <name>Epidermolysis bullosa simplex 3, localized or generalized intermediate, with BP230 deficiency</name>
        <acronym>EBS3</acronym>
        <description>A form of epidermolysis bullosa, a genodermatosis characterized by recurrent blistering, fragility of the skin and mucosal epithelia, and erosions caused by minor mechanical trauma. EBS3 is an autosomal recessive disorder characterized by skin blistering mainly occurring on the feet and ankles. Ultrastructural analysis of skin biopsy shows abnormal hemidesmosomes with poorly formed inner plaques.</description>
        <dbReference type="MIM" id="615425"/>
    </disease>
    <text>The disease is caused by variants affecting the gene represented in this entry.</text>
</comment>
<comment type="miscellaneous">
    <molecule>Isoform 4</molecule>
    <text evidence="32">Incomplete sequence.</text>
</comment>
<comment type="miscellaneous">
    <molecule>Isoform 5</molecule>
    <text evidence="32">May be produced at very low levels due to a premature stop codon in the mRNA, leading to nonsense-mediated mRNA decay.</text>
</comment>
<comment type="miscellaneous">
    <molecule>Isoform 6</molecule>
    <text evidence="32">Incomplete sequence. Transmembrane protein (helical transmembrane domain from amino acid 18 to 38).</text>
</comment>
<comment type="miscellaneous">
    <molecule>Isoform 7</molecule>
    <text evidence="32">Incomplete sequence.</text>
</comment>
<comment type="miscellaneous">
    <molecule>Isoform 8</molecule>
    <text evidence="32">Probably myristoylated on Gly-2. Probably S-palmitoylated on Cys-5 and Cys-7.</text>
</comment>
<comment type="sequence caution" evidence="32">
    <conflict type="miscellaneous discrepancy">
        <sequence resource="EMBL-CDS" id="AAA35538"/>
    </conflict>
    <text>Contaminating sequence. Sequence of unknown origin in the C-terminal part.</text>
</comment>
<comment type="sequence caution" evidence="32">
    <conflict type="erroneous gene model prediction">
        <sequence resource="EMBL-CDS" id="AAA57185"/>
    </conflict>
</comment>
<comment type="sequence caution" evidence="32">
    <conflict type="erroneous initiation">
        <sequence resource="EMBL-CDS" id="AAH16991"/>
    </conflict>
    <text>Extended N-terminus.</text>
</comment>
<comment type="sequence caution" evidence="32">
    <conflict type="erroneous initiation">
        <sequence resource="EMBL-CDS" id="BAB70870"/>
    </conflict>
    <text>Truncated N-terminus.</text>
</comment>
<comment type="sequence caution" evidence="32">
    <conflict type="erroneous initiation">
        <sequence resource="EMBL-CDS" id="BAC04449"/>
    </conflict>
    <text>Truncated N-terminus.</text>
</comment>
<comment type="sequence caution" evidence="32">
    <conflict type="erroneous initiation">
        <sequence resource="EMBL-CDS" id="BAC04848"/>
    </conflict>
    <text>Truncated N-terminus.</text>
</comment>
<comment type="sequence caution" evidence="32">
    <molecule>Isoform 6</molecule>
    <conflict type="frameshift">
        <sequence resource="EMBL-CDS" id="AAC50244"/>
    </conflict>
</comment>
<gene>
    <name evidence="33" type="primary">DST</name>
    <name type="synonym">BP230</name>
    <name type="synonym">BP240</name>
    <name type="synonym">BPAG1</name>
    <name type="synonym">DMH</name>
    <name type="synonym">DT</name>
    <name type="synonym">KIAA0728</name>
</gene>
<proteinExistence type="evidence at protein level"/>
<dbReference type="EMBL" id="M69225">
    <property type="status" value="NOT_ANNOTATED_CDS"/>
    <property type="molecule type" value="mRNA"/>
</dbReference>
<dbReference type="EMBL" id="L11690">
    <property type="protein sequence ID" value="AAA52288.1"/>
    <property type="molecule type" value="mRNA"/>
</dbReference>
<dbReference type="EMBL" id="AF400226">
    <property type="protein sequence ID" value="AAL62061.1"/>
    <property type="molecule type" value="mRNA"/>
</dbReference>
<dbReference type="EMBL" id="AF400227">
    <property type="protein sequence ID" value="AAL62062.1"/>
    <property type="molecule type" value="mRNA"/>
</dbReference>
<dbReference type="EMBL" id="AK055189">
    <property type="protein sequence ID" value="BAB70870.1"/>
    <property type="status" value="ALT_INIT"/>
    <property type="molecule type" value="mRNA"/>
</dbReference>
<dbReference type="EMBL" id="AK094883">
    <property type="protein sequence ID" value="BAC04449.1"/>
    <property type="status" value="ALT_INIT"/>
    <property type="molecule type" value="mRNA"/>
</dbReference>
<dbReference type="EMBL" id="AK096713">
    <property type="protein sequence ID" value="BAC04848.1"/>
    <property type="status" value="ALT_INIT"/>
    <property type="molecule type" value="mRNA"/>
</dbReference>
<dbReference type="EMBL" id="AK295864">
    <property type="protein sequence ID" value="BAH12207.1"/>
    <property type="molecule type" value="mRNA"/>
</dbReference>
<dbReference type="EMBL" id="AL049215">
    <property type="status" value="NOT_ANNOTATED_CDS"/>
    <property type="molecule type" value="Genomic_DNA"/>
</dbReference>
<dbReference type="EMBL" id="AL096710">
    <property type="status" value="NOT_ANNOTATED_CDS"/>
    <property type="molecule type" value="Genomic_DNA"/>
</dbReference>
<dbReference type="EMBL" id="AL590005">
    <property type="status" value="NOT_ANNOTATED_CDS"/>
    <property type="molecule type" value="Genomic_DNA"/>
</dbReference>
<dbReference type="EMBL" id="AL137008">
    <property type="status" value="NOT_ANNOTATED_CDS"/>
    <property type="molecule type" value="Genomic_DNA"/>
</dbReference>
<dbReference type="EMBL" id="AL512422">
    <property type="status" value="NOT_ANNOTATED_CDS"/>
    <property type="molecule type" value="Genomic_DNA"/>
</dbReference>
<dbReference type="EMBL" id="AL512448">
    <property type="status" value="NOT_ANNOTATED_CDS"/>
    <property type="molecule type" value="Genomic_DNA"/>
</dbReference>
<dbReference type="EMBL" id="AL590037">
    <property type="status" value="NOT_ANNOTATED_CDS"/>
    <property type="molecule type" value="Genomic_DNA"/>
</dbReference>
<dbReference type="EMBL" id="KF458172">
    <property type="status" value="NOT_ANNOTATED_CDS"/>
    <property type="molecule type" value="Genomic_DNA"/>
</dbReference>
<dbReference type="EMBL" id="BC016991">
    <property type="protein sequence ID" value="AAH16991.1"/>
    <property type="status" value="ALT_INIT"/>
    <property type="molecule type" value="mRNA"/>
</dbReference>
<dbReference type="EMBL" id="U31850">
    <property type="protein sequence ID" value="AAC50243.1"/>
    <property type="molecule type" value="mRNA"/>
</dbReference>
<dbReference type="EMBL" id="U31851">
    <property type="protein sequence ID" value="AAC50244.1"/>
    <property type="status" value="ALT_FRAME"/>
    <property type="molecule type" value="mRNA"/>
</dbReference>
<dbReference type="EMBL" id="AF165191">
    <property type="protein sequence ID" value="AAD49334.1"/>
    <property type="molecule type" value="mRNA"/>
</dbReference>
<dbReference type="EMBL" id="AY032900">
    <property type="protein sequence ID" value="AAK63130.1"/>
    <property type="molecule type" value="mRNA"/>
</dbReference>
<dbReference type="EMBL" id="AY032901">
    <property type="protein sequence ID" value="AAK63131.1"/>
    <property type="molecule type" value="mRNA"/>
</dbReference>
<dbReference type="EMBL" id="M63618">
    <property type="protein sequence ID" value="AAA35606.1"/>
    <property type="molecule type" value="mRNA"/>
</dbReference>
<dbReference type="EMBL" id="AB018271">
    <property type="protein sequence ID" value="BAA34448.2"/>
    <property type="molecule type" value="mRNA"/>
</dbReference>
<dbReference type="EMBL" id="M22942">
    <property type="protein sequence ID" value="AAA35538.1"/>
    <property type="status" value="ALT_SEQ"/>
    <property type="molecule type" value="mRNA"/>
</dbReference>
<dbReference type="EMBL" id="X58677">
    <property type="protein sequence ID" value="CAA41528.1"/>
    <property type="molecule type" value="mRNA"/>
</dbReference>
<dbReference type="EMBL" id="U04850">
    <property type="protein sequence ID" value="AAA57184.1"/>
    <property type="molecule type" value="Genomic_DNA"/>
</dbReference>
<dbReference type="EMBL" id="U04850">
    <property type="protein sequence ID" value="AAA57185.1"/>
    <property type="status" value="ALT_SEQ"/>
    <property type="molecule type" value="Genomic_DNA"/>
</dbReference>
<dbReference type="CCDS" id="CCDS47443.1">
    <molecule id="Q03001-8"/>
</dbReference>
<dbReference type="CCDS" id="CCDS4959.1">
    <molecule id="Q03001-3"/>
</dbReference>
<dbReference type="CCDS" id="CCDS93934.1">
    <molecule id="Q03001-14"/>
</dbReference>
<dbReference type="PIR" id="I56317">
    <property type="entry name" value="A40937"/>
</dbReference>
<dbReference type="RefSeq" id="NP_001138241.1">
    <property type="nucleotide sequence ID" value="NM_001144769.2"/>
</dbReference>
<dbReference type="RefSeq" id="NP_001138242.1">
    <property type="nucleotide sequence ID" value="NM_001144770.1"/>
</dbReference>
<dbReference type="RefSeq" id="NP_001361659.1">
    <molecule id="Q03001-14"/>
    <property type="nucleotide sequence ID" value="NM_001374730.1"/>
</dbReference>
<dbReference type="RefSeq" id="NP_001714.1">
    <molecule id="Q03001-3"/>
    <property type="nucleotide sequence ID" value="NM_001723.7"/>
</dbReference>
<dbReference type="RefSeq" id="NP_056363.2">
    <molecule id="Q03001-8"/>
    <property type="nucleotide sequence ID" value="NM_015548.4"/>
</dbReference>
<dbReference type="RefSeq" id="NP_899236.1">
    <property type="nucleotide sequence ID" value="NM_183380.3"/>
</dbReference>
<dbReference type="RefSeq" id="XP_016866713.1">
    <property type="nucleotide sequence ID" value="XM_017011224.1"/>
</dbReference>
<dbReference type="PDB" id="3GJO">
    <property type="method" value="X-ray"/>
    <property type="resolution" value="2.50 A"/>
    <property type="chains" value="E/F/G/H=7541-7570"/>
</dbReference>
<dbReference type="PDB" id="7OLG">
    <property type="method" value="NMR"/>
    <property type="chains" value="C/D=7548-7558"/>
</dbReference>
<dbReference type="PDBsum" id="3GJO"/>
<dbReference type="PDBsum" id="7OLG"/>
<dbReference type="SMR" id="Q03001"/>
<dbReference type="BioGRID" id="107135">
    <property type="interactions" value="307"/>
</dbReference>
<dbReference type="DIP" id="DIP-33131N"/>
<dbReference type="ELM" id="Q03001"/>
<dbReference type="FunCoup" id="Q03001">
    <property type="interactions" value="1276"/>
</dbReference>
<dbReference type="IntAct" id="Q03001">
    <property type="interactions" value="134"/>
</dbReference>
<dbReference type="MINT" id="Q03001"/>
<dbReference type="STRING" id="9606.ENSP00000307959"/>
<dbReference type="GlyCosmos" id="Q03001">
    <property type="glycosylation" value="6 sites, 1 glycan"/>
</dbReference>
<dbReference type="GlyGen" id="Q03001">
    <property type="glycosylation" value="16 sites, 1 N-linked glycan (1 site), 1 O-linked glycan (13 sites)"/>
</dbReference>
<dbReference type="iPTMnet" id="Q03001"/>
<dbReference type="MetOSite" id="Q03001"/>
<dbReference type="PhosphoSitePlus" id="Q03001"/>
<dbReference type="SwissPalm" id="Q03001"/>
<dbReference type="BioMuta" id="DST"/>
<dbReference type="DMDM" id="294862529"/>
<dbReference type="jPOST" id="Q03001"/>
<dbReference type="MassIVE" id="Q03001"/>
<dbReference type="PaxDb" id="9606-ENSP00000307959"/>
<dbReference type="PeptideAtlas" id="Q03001"/>
<dbReference type="ProteomicsDB" id="17852"/>
<dbReference type="ProteomicsDB" id="58151">
    <molecule id="Q03001-7"/>
</dbReference>
<dbReference type="ProteomicsDB" id="58152">
    <molecule id="Q03001-10"/>
</dbReference>
<dbReference type="ProteomicsDB" id="58153">
    <molecule id="Q03001-11"/>
</dbReference>
<dbReference type="ProteomicsDB" id="58154">
    <molecule id="Q03001-12"/>
</dbReference>
<dbReference type="ProteomicsDB" id="58155">
    <molecule id="Q03001-13"/>
</dbReference>
<dbReference type="ProteomicsDB" id="58156">
    <molecule id="Q03001-3"/>
</dbReference>
<dbReference type="ProteomicsDB" id="58157">
    <molecule id="Q03001-8"/>
</dbReference>
<dbReference type="ProteomicsDB" id="58158">
    <molecule id="Q03001-9"/>
</dbReference>
<dbReference type="Pumba" id="Q03001"/>
<dbReference type="ABCD" id="Q03001">
    <property type="antibodies" value="3 sequenced antibodies"/>
</dbReference>
<dbReference type="Antibodypedia" id="31066">
    <property type="antibodies" value="184 antibodies from 23 providers"/>
</dbReference>
<dbReference type="DNASU" id="667"/>
<dbReference type="Ensembl" id="ENST00000244364.10">
    <molecule id="Q03001-8"/>
    <property type="protein sequence ID" value="ENSP00000244364.6"/>
    <property type="gene ID" value="ENSG00000151914.22"/>
</dbReference>
<dbReference type="Ensembl" id="ENST00000370765.11">
    <molecule id="Q03001-3"/>
    <property type="protein sequence ID" value="ENSP00000359801.6"/>
    <property type="gene ID" value="ENSG00000151914.22"/>
</dbReference>
<dbReference type="Ensembl" id="ENST00000370788.6">
    <molecule id="Q03001-14"/>
    <property type="protein sequence ID" value="ENSP00000359824.2"/>
    <property type="gene ID" value="ENSG00000151914.22"/>
</dbReference>
<dbReference type="Ensembl" id="ENST00000439203.5">
    <molecule id="Q03001-9"/>
    <property type="protein sequence ID" value="ENSP00000404924.1"/>
    <property type="gene ID" value="ENSG00000151914.22"/>
</dbReference>
<dbReference type="GeneID" id="667"/>
<dbReference type="KEGG" id="hsa:667"/>
<dbReference type="UCSC" id="uc003pcy.5">
    <molecule id="Q03001-7"/>
    <property type="organism name" value="human"/>
</dbReference>
<dbReference type="AGR" id="HGNC:1090"/>
<dbReference type="CTD" id="667"/>
<dbReference type="DisGeNET" id="667"/>
<dbReference type="GeneCards" id="DST"/>
<dbReference type="GeneReviews" id="DST"/>
<dbReference type="HGNC" id="HGNC:1090">
    <property type="gene designation" value="DST"/>
</dbReference>
<dbReference type="HPA" id="ENSG00000151914">
    <property type="expression patterns" value="Low tissue specificity"/>
</dbReference>
<dbReference type="MalaCards" id="DST"/>
<dbReference type="MIM" id="113810">
    <property type="type" value="gene"/>
</dbReference>
<dbReference type="MIM" id="614653">
    <property type="type" value="phenotype"/>
</dbReference>
<dbReference type="MIM" id="615425">
    <property type="type" value="phenotype"/>
</dbReference>
<dbReference type="neXtProt" id="NX_Q03001"/>
<dbReference type="OpenTargets" id="ENSG00000151914"/>
<dbReference type="Orphanet" id="412181">
    <property type="disease" value="Epidermolysis bullosa simplex due to BP230 deficiency"/>
</dbReference>
<dbReference type="Orphanet" id="314381">
    <property type="disease" value="Hereditary sensory and autonomic neuropathy type 6"/>
</dbReference>
<dbReference type="PharmGKB" id="PA25399"/>
<dbReference type="VEuPathDB" id="HostDB:ENSG00000151914"/>
<dbReference type="eggNOG" id="KOG0516">
    <property type="taxonomic scope" value="Eukaryota"/>
</dbReference>
<dbReference type="eggNOG" id="KOG0517">
    <property type="taxonomic scope" value="Eukaryota"/>
</dbReference>
<dbReference type="GeneTree" id="ENSGT00940000155008"/>
<dbReference type="HOGENOM" id="CLU_000015_3_0_1"/>
<dbReference type="InParanoid" id="Q03001"/>
<dbReference type="OrthoDB" id="9479997at2759"/>
<dbReference type="PAN-GO" id="Q03001">
    <property type="GO annotations" value="11 GO annotations based on evolutionary models"/>
</dbReference>
<dbReference type="PhylomeDB" id="Q03001"/>
<dbReference type="TreeFam" id="TF335163"/>
<dbReference type="PathwayCommons" id="Q03001"/>
<dbReference type="Reactome" id="R-HSA-2022090">
    <molecule id="Q03001-3"/>
    <property type="pathway name" value="Assembly of collagen fibrils and other multimeric structures"/>
</dbReference>
<dbReference type="Reactome" id="R-HSA-446107">
    <property type="pathway name" value="Type I hemidesmosome assembly"/>
</dbReference>
<dbReference type="Reactome" id="R-HSA-9013420">
    <property type="pathway name" value="RHOU GTPase cycle"/>
</dbReference>
<dbReference type="Reactome" id="R-HSA-9013424">
    <property type="pathway name" value="RHOV GTPase cycle"/>
</dbReference>
<dbReference type="Reactome" id="R-HSA-9696264">
    <property type="pathway name" value="RND3 GTPase cycle"/>
</dbReference>
<dbReference type="Reactome" id="R-HSA-9696270">
    <property type="pathway name" value="RND2 GTPase cycle"/>
</dbReference>
<dbReference type="Reactome" id="R-HSA-9696273">
    <property type="pathway name" value="RND1 GTPase cycle"/>
</dbReference>
<dbReference type="SignaLink" id="Q03001"/>
<dbReference type="SIGNOR" id="Q03001"/>
<dbReference type="BioGRID-ORCS" id="667">
    <property type="hits" value="16 hits in 1162 CRISPR screens"/>
</dbReference>
<dbReference type="CD-CODE" id="DEE660B4">
    <property type="entry name" value="Stress granule"/>
</dbReference>
<dbReference type="CD-CODE" id="FB4E32DD">
    <property type="entry name" value="Presynaptic clusters and postsynaptic densities"/>
</dbReference>
<dbReference type="ChiTaRS" id="DST">
    <property type="organism name" value="human"/>
</dbReference>
<dbReference type="EvolutionaryTrace" id="Q03001"/>
<dbReference type="GeneWiki" id="Dystonin"/>
<dbReference type="GenomeRNAi" id="667"/>
<dbReference type="Pharos" id="Q03001">
    <property type="development level" value="Tbio"/>
</dbReference>
<dbReference type="PRO" id="PR:Q03001"/>
<dbReference type="Proteomes" id="UP000005640">
    <property type="component" value="Chromosome 6"/>
</dbReference>
<dbReference type="RNAct" id="Q03001">
    <property type="molecule type" value="protein"/>
</dbReference>
<dbReference type="Bgee" id="ENSG00000151914">
    <property type="expression patterns" value="Expressed in corpus callosum and 207 other cell types or tissues"/>
</dbReference>
<dbReference type="ExpressionAtlas" id="Q03001">
    <property type="expression patterns" value="baseline and differential"/>
</dbReference>
<dbReference type="GO" id="GO:0015629">
    <property type="term" value="C:actin cytoskeleton"/>
    <property type="evidence" value="ECO:0000314"/>
    <property type="project" value="UniProtKB"/>
</dbReference>
<dbReference type="GO" id="GO:0030424">
    <property type="term" value="C:axon"/>
    <property type="evidence" value="ECO:0000314"/>
    <property type="project" value="UniProtKB"/>
</dbReference>
<dbReference type="GO" id="GO:1904115">
    <property type="term" value="C:axon cytoplasm"/>
    <property type="evidence" value="ECO:0007669"/>
    <property type="project" value="GOC"/>
</dbReference>
<dbReference type="GO" id="GO:0009925">
    <property type="term" value="C:basal plasma membrane"/>
    <property type="evidence" value="ECO:0000303"/>
    <property type="project" value="UniProtKB"/>
</dbReference>
<dbReference type="GO" id="GO:0005604">
    <property type="term" value="C:basement membrane"/>
    <property type="evidence" value="ECO:0000304"/>
    <property type="project" value="ProtInc"/>
</dbReference>
<dbReference type="GO" id="GO:0005938">
    <property type="term" value="C:cell cortex"/>
    <property type="evidence" value="ECO:0007669"/>
    <property type="project" value="UniProtKB-SubCell"/>
</dbReference>
<dbReference type="GO" id="GO:0031252">
    <property type="term" value="C:cell leading edge"/>
    <property type="evidence" value="ECO:0000314"/>
    <property type="project" value="UniProtKB"/>
</dbReference>
<dbReference type="GO" id="GO:0005737">
    <property type="term" value="C:cytoplasm"/>
    <property type="evidence" value="ECO:0000314"/>
    <property type="project" value="UniProtKB"/>
</dbReference>
<dbReference type="GO" id="GO:0031410">
    <property type="term" value="C:cytoplasmic vesicle"/>
    <property type="evidence" value="ECO:0000314"/>
    <property type="project" value="MGI"/>
</dbReference>
<dbReference type="GO" id="GO:0005829">
    <property type="term" value="C:cytosol"/>
    <property type="evidence" value="ECO:0000314"/>
    <property type="project" value="HPA"/>
</dbReference>
<dbReference type="GO" id="GO:0005789">
    <property type="term" value="C:endoplasmic reticulum membrane"/>
    <property type="evidence" value="ECO:0007669"/>
    <property type="project" value="UniProtKB-SubCell"/>
</dbReference>
<dbReference type="GO" id="GO:0005925">
    <property type="term" value="C:focal adhesion"/>
    <property type="evidence" value="ECO:0007005"/>
    <property type="project" value="UniProtKB"/>
</dbReference>
<dbReference type="GO" id="GO:0031673">
    <property type="term" value="C:H zone"/>
    <property type="evidence" value="ECO:0007669"/>
    <property type="project" value="UniProtKB-SubCell"/>
</dbReference>
<dbReference type="GO" id="GO:0030056">
    <property type="term" value="C:hemidesmosome"/>
    <property type="evidence" value="ECO:0000314"/>
    <property type="project" value="UniProtKB"/>
</dbReference>
<dbReference type="GO" id="GO:0005882">
    <property type="term" value="C:intermediate filament"/>
    <property type="evidence" value="ECO:0007669"/>
    <property type="project" value="UniProtKB-KW"/>
</dbReference>
<dbReference type="GO" id="GO:0045111">
    <property type="term" value="C:intermediate filament cytoskeleton"/>
    <property type="evidence" value="ECO:0000314"/>
    <property type="project" value="UniProtKB"/>
</dbReference>
<dbReference type="GO" id="GO:0016020">
    <property type="term" value="C:membrane"/>
    <property type="evidence" value="ECO:0000318"/>
    <property type="project" value="GO_Central"/>
</dbReference>
<dbReference type="GO" id="GO:0015630">
    <property type="term" value="C:microtubule cytoskeleton"/>
    <property type="evidence" value="ECO:0000314"/>
    <property type="project" value="UniProtKB"/>
</dbReference>
<dbReference type="GO" id="GO:0035371">
    <property type="term" value="C:microtubule plus-end"/>
    <property type="evidence" value="ECO:0000314"/>
    <property type="project" value="UniProtKB"/>
</dbReference>
<dbReference type="GO" id="GO:0005635">
    <property type="term" value="C:nuclear envelope"/>
    <property type="evidence" value="ECO:0007669"/>
    <property type="project" value="UniProtKB-SubCell"/>
</dbReference>
<dbReference type="GO" id="GO:0005654">
    <property type="term" value="C:nucleoplasm"/>
    <property type="evidence" value="ECO:0000314"/>
    <property type="project" value="HPA"/>
</dbReference>
<dbReference type="GO" id="GO:0005634">
    <property type="term" value="C:nucleus"/>
    <property type="evidence" value="ECO:0007005"/>
    <property type="project" value="UniProtKB"/>
</dbReference>
<dbReference type="GO" id="GO:0001725">
    <property type="term" value="C:stress fiber"/>
    <property type="evidence" value="ECO:0007669"/>
    <property type="project" value="UniProtKB-SubCell"/>
</dbReference>
<dbReference type="GO" id="GO:0030018">
    <property type="term" value="C:Z disc"/>
    <property type="evidence" value="ECO:0000314"/>
    <property type="project" value="UniProtKB"/>
</dbReference>
<dbReference type="GO" id="GO:0003779">
    <property type="term" value="F:actin binding"/>
    <property type="evidence" value="ECO:0007669"/>
    <property type="project" value="UniProtKB-KW"/>
</dbReference>
<dbReference type="GO" id="GO:0005509">
    <property type="term" value="F:calcium ion binding"/>
    <property type="evidence" value="ECO:0007669"/>
    <property type="project" value="InterPro"/>
</dbReference>
<dbReference type="GO" id="GO:0005178">
    <property type="term" value="F:integrin binding"/>
    <property type="evidence" value="ECO:0000353"/>
    <property type="project" value="UniProtKB"/>
</dbReference>
<dbReference type="GO" id="GO:0008017">
    <property type="term" value="F:microtubule binding"/>
    <property type="evidence" value="ECO:0000318"/>
    <property type="project" value="GO_Central"/>
</dbReference>
<dbReference type="GO" id="GO:0051010">
    <property type="term" value="F:microtubule plus-end binding"/>
    <property type="evidence" value="ECO:0000314"/>
    <property type="project" value="UniProtKB"/>
</dbReference>
<dbReference type="GO" id="GO:0042803">
    <property type="term" value="F:protein homodimerization activity"/>
    <property type="evidence" value="ECO:0000314"/>
    <property type="project" value="UniProtKB"/>
</dbReference>
<dbReference type="GO" id="GO:0005198">
    <property type="term" value="F:structural molecule activity"/>
    <property type="evidence" value="ECO:0000318"/>
    <property type="project" value="GO_Central"/>
</dbReference>
<dbReference type="GO" id="GO:0007155">
    <property type="term" value="P:cell adhesion"/>
    <property type="evidence" value="ECO:0007669"/>
    <property type="project" value="UniProtKB-KW"/>
</dbReference>
<dbReference type="GO" id="GO:0048870">
    <property type="term" value="P:cell motility"/>
    <property type="evidence" value="ECO:0000315"/>
    <property type="project" value="UniProtKB"/>
</dbReference>
<dbReference type="GO" id="GO:0007010">
    <property type="term" value="P:cytoskeleton organization"/>
    <property type="evidence" value="ECO:0000315"/>
    <property type="project" value="UniProtKB"/>
</dbReference>
<dbReference type="GO" id="GO:0031581">
    <property type="term" value="P:hemidesmosome assembly"/>
    <property type="evidence" value="ECO:0000314"/>
    <property type="project" value="UniProtKB"/>
</dbReference>
<dbReference type="GO" id="GO:0007229">
    <property type="term" value="P:integrin-mediated signaling pathway"/>
    <property type="evidence" value="ECO:0000303"/>
    <property type="project" value="UniProtKB"/>
</dbReference>
<dbReference type="GO" id="GO:0045104">
    <property type="term" value="P:intermediate filament cytoskeleton organization"/>
    <property type="evidence" value="ECO:0000270"/>
    <property type="project" value="UniProtKB"/>
</dbReference>
<dbReference type="GO" id="GO:0030011">
    <property type="term" value="P:maintenance of cell polarity"/>
    <property type="evidence" value="ECO:0000315"/>
    <property type="project" value="UniProtKB"/>
</dbReference>
<dbReference type="GO" id="GO:0000226">
    <property type="term" value="P:microtubule cytoskeleton organization"/>
    <property type="evidence" value="ECO:0000314"/>
    <property type="project" value="UniProtKB"/>
</dbReference>
<dbReference type="GO" id="GO:0009611">
    <property type="term" value="P:response to wounding"/>
    <property type="evidence" value="ECO:0000314"/>
    <property type="project" value="UniProtKB"/>
</dbReference>
<dbReference type="GO" id="GO:0008090">
    <property type="term" value="P:retrograde axonal transport"/>
    <property type="evidence" value="ECO:0000250"/>
    <property type="project" value="UniProtKB"/>
</dbReference>
<dbReference type="GO" id="GO:0042060">
    <property type="term" value="P:wound healing"/>
    <property type="evidence" value="ECO:0000318"/>
    <property type="project" value="GO_Central"/>
</dbReference>
<dbReference type="CDD" id="cd21236">
    <property type="entry name" value="CH_DYST_rpt1"/>
    <property type="match status" value="1"/>
</dbReference>
<dbReference type="CDD" id="cd21239">
    <property type="entry name" value="CH_DYST_rpt2"/>
    <property type="match status" value="1"/>
</dbReference>
<dbReference type="CDD" id="cd00051">
    <property type="entry name" value="EFh"/>
    <property type="match status" value="1"/>
</dbReference>
<dbReference type="CDD" id="cd00176">
    <property type="entry name" value="SPEC"/>
    <property type="match status" value="17"/>
</dbReference>
<dbReference type="FunFam" id="1.20.58.60:FF:000144">
    <property type="entry name" value="Dystonin"/>
    <property type="match status" value="1"/>
</dbReference>
<dbReference type="FunFam" id="1.20.58.60:FF:000185">
    <property type="entry name" value="Dystonin"/>
    <property type="match status" value="1"/>
</dbReference>
<dbReference type="FunFam" id="3.90.1290.10:FF:000022">
    <property type="entry name" value="Dystonin"/>
    <property type="match status" value="1"/>
</dbReference>
<dbReference type="FunFam" id="1.20.58.60:FF:000009">
    <property type="entry name" value="dystonin isoform X1"/>
    <property type="match status" value="1"/>
</dbReference>
<dbReference type="FunFam" id="1.20.58.60:FF:000074">
    <property type="entry name" value="dystonin isoform X1"/>
    <property type="match status" value="1"/>
</dbReference>
<dbReference type="FunFam" id="1.20.58.60:FF:000077">
    <property type="entry name" value="dystonin isoform X1"/>
    <property type="match status" value="1"/>
</dbReference>
<dbReference type="FunFam" id="1.20.58.60:FF:000093">
    <property type="entry name" value="dystonin isoform X1"/>
    <property type="match status" value="1"/>
</dbReference>
<dbReference type="FunFam" id="1.20.58.60:FF:000111">
    <property type="entry name" value="dystonin isoform X1"/>
    <property type="match status" value="1"/>
</dbReference>
<dbReference type="FunFam" id="1.20.58.60:FF:000114">
    <property type="entry name" value="dystonin isoform X1"/>
    <property type="match status" value="1"/>
</dbReference>
<dbReference type="FunFam" id="1.20.58.60:FF:000121">
    <property type="entry name" value="dystonin isoform X1"/>
    <property type="match status" value="1"/>
</dbReference>
<dbReference type="FunFam" id="3.30.920.20:FF:000002">
    <property type="entry name" value="dystonin isoform X1"/>
    <property type="match status" value="1"/>
</dbReference>
<dbReference type="FunFam" id="1.20.58.60:FF:000052">
    <property type="entry name" value="dystonin isoform X2"/>
    <property type="match status" value="1"/>
</dbReference>
<dbReference type="FunFam" id="1.20.58.60:FF:000060">
    <property type="entry name" value="dystonin isoform X2"/>
    <property type="match status" value="1"/>
</dbReference>
<dbReference type="FunFam" id="1.20.58.60:FF:000069">
    <property type="entry name" value="dystonin isoform X2"/>
    <property type="match status" value="1"/>
</dbReference>
<dbReference type="FunFam" id="1.20.58.60:FF:000085">
    <property type="entry name" value="dystonin isoform X2"/>
    <property type="match status" value="1"/>
</dbReference>
<dbReference type="FunFam" id="1.20.58.60:FF:000094">
    <property type="entry name" value="dystonin isoform X2"/>
    <property type="match status" value="1"/>
</dbReference>
<dbReference type="FunFam" id="1.20.58.60:FF:000098">
    <property type="entry name" value="dystonin isoform X3"/>
    <property type="match status" value="1"/>
</dbReference>
<dbReference type="FunFam" id="3.90.1290.10:FF:000013">
    <property type="entry name" value="dystonin isoform X7"/>
    <property type="match status" value="1"/>
</dbReference>
<dbReference type="FunFam" id="3.90.1290.10:FF:000015">
    <property type="entry name" value="dystonin isoform X7"/>
    <property type="match status" value="1"/>
</dbReference>
<dbReference type="FunFam" id="1.10.238.10:FF:000013">
    <property type="entry name" value="Microtubule-actin cross-linking factor 1"/>
    <property type="match status" value="1"/>
</dbReference>
<dbReference type="FunFam" id="1.10.418.10:FF:000002">
    <property type="entry name" value="Microtubule-actin cross-linking factor 1"/>
    <property type="match status" value="1"/>
</dbReference>
<dbReference type="FunFam" id="1.10.418.10:FF:000017">
    <property type="entry name" value="Microtubule-actin cross-linking factor 1"/>
    <property type="match status" value="1"/>
</dbReference>
<dbReference type="FunFam" id="1.20.58.60:FF:000001">
    <property type="entry name" value="Microtubule-actin cross-linking factor 1"/>
    <property type="match status" value="3"/>
</dbReference>
<dbReference type="FunFam" id="1.20.58.60:FF:000012">
    <property type="entry name" value="Microtubule-actin cross-linking factor 1"/>
    <property type="match status" value="1"/>
</dbReference>
<dbReference type="FunFam" id="1.20.58.60:FF:000016">
    <property type="entry name" value="Microtubule-actin cross-linking factor 1"/>
    <property type="match status" value="1"/>
</dbReference>
<dbReference type="FunFam" id="1.20.58.60:FF:000021">
    <property type="entry name" value="Microtubule-actin cross-linking factor 1"/>
    <property type="match status" value="1"/>
</dbReference>
<dbReference type="FunFam" id="1.20.58.60:FF:000022">
    <property type="entry name" value="Microtubule-actin cross-linking factor 1"/>
    <property type="match status" value="1"/>
</dbReference>
<dbReference type="FunFam" id="1.20.58.60:FF:000027">
    <property type="entry name" value="Microtubule-actin cross-linking factor 1"/>
    <property type="match status" value="1"/>
</dbReference>
<dbReference type="FunFam" id="1.20.58.60:FF:000031">
    <property type="entry name" value="Microtubule-actin cross-linking factor 1"/>
    <property type="match status" value="1"/>
</dbReference>
<dbReference type="FunFam" id="2.30.30.40:FF:000011">
    <property type="entry name" value="Microtubule-actin cross-linking factor 1"/>
    <property type="match status" value="1"/>
</dbReference>
<dbReference type="FunFam" id="1.20.58.60:FF:000008">
    <property type="entry name" value="microtubule-actin cross-linking factor 1"/>
    <property type="match status" value="2"/>
</dbReference>
<dbReference type="FunFam" id="1.20.58.60:FF:000014">
    <property type="entry name" value="microtubule-actin cross-linking factor 1"/>
    <property type="match status" value="1"/>
</dbReference>
<dbReference type="FunFam" id="1.20.58.60:FF:000025">
    <property type="entry name" value="microtubule-actin cross-linking factor 1"/>
    <property type="match status" value="1"/>
</dbReference>
<dbReference type="FunFam" id="1.20.58.60:FF:000010">
    <property type="entry name" value="plectin isoform X2"/>
    <property type="match status" value="1"/>
</dbReference>
<dbReference type="Gene3D" id="1.20.58.1060">
    <property type="match status" value="1"/>
</dbReference>
<dbReference type="Gene3D" id="1.20.58.60">
    <property type="match status" value="31"/>
</dbReference>
<dbReference type="Gene3D" id="1.10.418.10">
    <property type="entry name" value="Calponin-like domain"/>
    <property type="match status" value="2"/>
</dbReference>
<dbReference type="Gene3D" id="1.10.238.10">
    <property type="entry name" value="EF-hand"/>
    <property type="match status" value="1"/>
</dbReference>
<dbReference type="Gene3D" id="3.30.920.20">
    <property type="entry name" value="Gas2-like domain"/>
    <property type="match status" value="1"/>
</dbReference>
<dbReference type="Gene3D" id="3.90.1290.10">
    <property type="entry name" value="Plakin repeat"/>
    <property type="match status" value="3"/>
</dbReference>
<dbReference type="Gene3D" id="2.30.30.40">
    <property type="entry name" value="SH3 Domains"/>
    <property type="match status" value="1"/>
</dbReference>
<dbReference type="InterPro" id="IPR001589">
    <property type="entry name" value="Actinin_actin-bd_CS"/>
</dbReference>
<dbReference type="InterPro" id="IPR001715">
    <property type="entry name" value="CH_dom"/>
</dbReference>
<dbReference type="InterPro" id="IPR036872">
    <property type="entry name" value="CH_dom_sf"/>
</dbReference>
<dbReference type="InterPro" id="IPR041615">
    <property type="entry name" value="Desmoplakin_SH3"/>
</dbReference>
<dbReference type="InterPro" id="IPR041573">
    <property type="entry name" value="Desmoplakin_Spectrin-like"/>
</dbReference>
<dbReference type="InterPro" id="IPR011992">
    <property type="entry name" value="EF-hand-dom_pair"/>
</dbReference>
<dbReference type="InterPro" id="IPR018247">
    <property type="entry name" value="EF_Hand_1_Ca_BS"/>
</dbReference>
<dbReference type="InterPro" id="IPR002048">
    <property type="entry name" value="EF_hand_dom"/>
</dbReference>
<dbReference type="InterPro" id="IPR003108">
    <property type="entry name" value="GAR_dom"/>
</dbReference>
<dbReference type="InterPro" id="IPR036534">
    <property type="entry name" value="GAR_dom_sf"/>
</dbReference>
<dbReference type="InterPro" id="IPR049538">
    <property type="entry name" value="PCN-like_spectrin-like_rpt"/>
</dbReference>
<dbReference type="InterPro" id="IPR043197">
    <property type="entry name" value="Plakin"/>
</dbReference>
<dbReference type="InterPro" id="IPR035915">
    <property type="entry name" value="Plakin_repeat_sf"/>
</dbReference>
<dbReference type="InterPro" id="IPR001101">
    <property type="entry name" value="Plectin_repeat"/>
</dbReference>
<dbReference type="InterPro" id="IPR001452">
    <property type="entry name" value="SH3_domain"/>
</dbReference>
<dbReference type="InterPro" id="IPR018159">
    <property type="entry name" value="Spectrin/alpha-actinin"/>
</dbReference>
<dbReference type="InterPro" id="IPR002017">
    <property type="entry name" value="Spectrin_repeat"/>
</dbReference>
<dbReference type="PANTHER" id="PTHR23169">
    <property type="entry name" value="ENVOPLAKIN"/>
    <property type="match status" value="1"/>
</dbReference>
<dbReference type="PANTHER" id="PTHR23169:SF21">
    <property type="entry name" value="EPIPLAKIN"/>
    <property type="match status" value="1"/>
</dbReference>
<dbReference type="Pfam" id="PF00307">
    <property type="entry name" value="CH"/>
    <property type="match status" value="2"/>
</dbReference>
<dbReference type="Pfam" id="PF13499">
    <property type="entry name" value="EF-hand_7"/>
    <property type="match status" value="1"/>
</dbReference>
<dbReference type="Pfam" id="PF02187">
    <property type="entry name" value="GAS2"/>
    <property type="match status" value="1"/>
</dbReference>
<dbReference type="Pfam" id="PF00681">
    <property type="entry name" value="Plectin"/>
    <property type="match status" value="2"/>
</dbReference>
<dbReference type="Pfam" id="PF17902">
    <property type="entry name" value="SH3_10"/>
    <property type="match status" value="1"/>
</dbReference>
<dbReference type="Pfam" id="PF00435">
    <property type="entry name" value="Spectrin"/>
    <property type="match status" value="20"/>
</dbReference>
<dbReference type="Pfam" id="PF18373">
    <property type="entry name" value="Spectrin_2"/>
    <property type="match status" value="1"/>
</dbReference>
<dbReference type="Pfam" id="PF21019">
    <property type="entry name" value="Spectrin_3"/>
    <property type="match status" value="1"/>
</dbReference>
<dbReference type="Pfam" id="PF21020">
    <property type="entry name" value="Spectrin_4"/>
    <property type="match status" value="1"/>
</dbReference>
<dbReference type="Pfam" id="PF21097">
    <property type="entry name" value="SR_plectin_7"/>
    <property type="match status" value="1"/>
</dbReference>
<dbReference type="SMART" id="SM00033">
    <property type="entry name" value="CH"/>
    <property type="match status" value="2"/>
</dbReference>
<dbReference type="SMART" id="SM00054">
    <property type="entry name" value="EFh"/>
    <property type="match status" value="2"/>
</dbReference>
<dbReference type="SMART" id="SM00243">
    <property type="entry name" value="GAS2"/>
    <property type="match status" value="1"/>
</dbReference>
<dbReference type="SMART" id="SM00250">
    <property type="entry name" value="PLEC"/>
    <property type="match status" value="8"/>
</dbReference>
<dbReference type="SMART" id="SM00150">
    <property type="entry name" value="SPEC"/>
    <property type="match status" value="32"/>
</dbReference>
<dbReference type="SUPFAM" id="SSF47576">
    <property type="entry name" value="Calponin-homology domain, CH-domain"/>
    <property type="match status" value="1"/>
</dbReference>
<dbReference type="SUPFAM" id="SSF47473">
    <property type="entry name" value="EF-hand"/>
    <property type="match status" value="1"/>
</dbReference>
<dbReference type="SUPFAM" id="SSF143575">
    <property type="entry name" value="GAS2 domain-like"/>
    <property type="match status" value="1"/>
</dbReference>
<dbReference type="SUPFAM" id="SSF75399">
    <property type="entry name" value="Plakin repeat"/>
    <property type="match status" value="2"/>
</dbReference>
<dbReference type="SUPFAM" id="SSF46966">
    <property type="entry name" value="Spectrin repeat"/>
    <property type="match status" value="29"/>
</dbReference>
<dbReference type="PROSITE" id="PS00019">
    <property type="entry name" value="ACTININ_1"/>
    <property type="match status" value="1"/>
</dbReference>
<dbReference type="PROSITE" id="PS00020">
    <property type="entry name" value="ACTININ_2"/>
    <property type="match status" value="1"/>
</dbReference>
<dbReference type="PROSITE" id="PS50021">
    <property type="entry name" value="CH"/>
    <property type="match status" value="2"/>
</dbReference>
<dbReference type="PROSITE" id="PS00018">
    <property type="entry name" value="EF_HAND_1"/>
    <property type="match status" value="2"/>
</dbReference>
<dbReference type="PROSITE" id="PS50222">
    <property type="entry name" value="EF_HAND_2"/>
    <property type="match status" value="2"/>
</dbReference>
<dbReference type="PROSITE" id="PS51460">
    <property type="entry name" value="GAR"/>
    <property type="match status" value="1"/>
</dbReference>
<dbReference type="PROSITE" id="PS50002">
    <property type="entry name" value="SH3"/>
    <property type="match status" value="1"/>
</dbReference>
<sequence length="7570" mass="860662">MAGYLSPAAYLYVEEQEYLQAYEDVLERYKDERDKVQKKTFTKWINQHLMKVRKHVNDLYEDLRDGHNLISLLEVLSGDTLPREKGRMRFHRLQNVQIALDYLKRRQVKLVNIRNDDITDGNPKLTLGLIWTIILHFQISDIHVTGESEDMSAKERLLLWTQQATEGYAGIRCENFTTCWRDGKLFNAIIHKYRPDLIDMNTVAVQSNLANLEHAFYVAEKIGVIRLLDPEDVDVSSPDEKSVITYVSSLYDAFPKVPEGGEGIGANDVEVKWIEYQNMVNYLIQWIRHHVTTMSERTFPNNPVELKALYNQYLQFKETEIPPKETEKSKIKRLYKLLEIWIEFGRIKLLQGYHPNDIEKEWGKLIIAMLEREKALRPEVERLEMLQQIANRVQRDSVICEDKLILAGNALQSDSKRLESGVQFQNEAEIAGYILECENLLRQHVIDVQILIDGKYYQADQLVQRVAKLRDEIMALRNECSSVYSKGRILTTEQTKLMISGITQSLNSGFAQTLHPSLTSGLTQSLTPSLTSSSMTSGLSSGMTSRLTPSVTPAYTPGFPSGLVPNFSSGVEPNSLQTLKLMQIRKPLLKSSLLDQNLTEEEINMKFVQDLLNWVDEMQVQLDRTEWGSDLPSVESHLENHKNVHRAIEEFESSLKEAKISEIQMTAPLKLTYAEKLHRLESQYAKLLNTSRNQERHLDTLHNFVSRATNELIWLNEKEEEEVAYDWSERNTNIARKKDYHAELMRELDQKEENIKSVQEIAEQLLLENHPARLTIEAYRAAMQTQWSWILQLCQCVEQHIKENTAYFEFFNDAKEATDYLRNLKDAIQRKYSCDRSSSIHKLEDLVQESMEEKEELLQYKSTIANLMGKAKTIIQLKPRNSDCPLKTSIPIKAICDYRQIEITIYKDDECVLANNSHRAKWKVISPTGNEAMVPSVCFTVPPPNKEAVDLANRIEQQYQNVLTLWHESHINMKSVVSWHYLINEIDRIRASNVASIKTMLPGEHQQVLSNLQSRFEDFLEDSQESQVFSGSDITQLEKEVNVCKQYYQELLKSAEREEQEESVYNLYISEVRNIRLRLENCEDRLIRQIRTPLERDDLHESVFRITEQEKLKKELERLKDDLGTITNKCEEFFSQAAASSSVPTLRSELNVVLQNMNQVYSMSSTYIDKLKTVNLVLKNTQAAEALVKLYETKLCEEEAVIADKNNIENLISTLKQWRSEVDEKRQVFHALEDELQKAKAISDEMFKTYKERDLDFDWHKEKADQLVERWQNVHVQIDNRLRDLEGIGKSLKYYRDTYHPLDDWIQQVETTQRKIQENQPENSKTLATQLNQQKMLVSEIEMKQSKMDECQKYAEQYSATVKDYELQTMTYRAMVDSQQKSPVKRRRMQSSADLIIQEFMDLRTRYTALVTLMTQYIKFAGDSLKRLEEEEKSLEEEKKEHVEKAKELQKWVSNISKTLKDAEKAGKPPFSKQKISSEEISTKKEQLSEALQTIQLFLAKHGDKMTDEERNELEKQVKTLQESYNLLFSESLKQLQESQTSGDVKVEEKLDKVIAGTIDQTTGEVLSVFQAVLRGLIDYDTGIRLLETQLMISGLISPELRKCFDLKDAKSHGLIDEQILCQLKELSKAKEIISAASPTTIPVLDALAQSMITESMAIKVLEILLSTGSLVIPATGEQLTLQKAFQQNLVSSALFSKVLERQNMCKDLIDPCTSEKVSLIDMVQRSTLQENTGMWLLPVRPQEGGRITLKCGRNISILRAAHEGLIDRETMFRLLSAQLLSGGLINSNSGQRMTVEEAVREGVIDRDTASSILTYQVQTGGIIQSNPAKRLTVDEAVQCDLITSSSALLVLEAQRGYVGLIWPHSGEIFPTSSSLQQELITNELAYKILNGRQKIAALYIPESSQVIGLDAAKQLGIIDNNTASILKNITLPDKMPDLGDLEACKNARRWLSFCKFQPSTVHDYRQEEDVFDGEEPVTTQTSEETKKLFLSYLMINSYMDANTGQRLLLYDGDLDEAVGMLLEGCHAEFDGNTAIKECLDVLSSSGVFLNNASGREKDECTATPSSFNKCHCGEPEHEETPENRKCAIDEEFNEMRNTVINSEFSQSGKLASTISIDPKVNSSPSVCVPSLISYLTQTELADISMLRSDSENILTNYENQSRVETNERANECSHSKNIQNFPSDLIENPIMKSKMSKFCGVNETENEDNTNRDSPIFDYSPRLSALLSHDKLMHSQGSFNDTHTPESNGNKCEAPALSFSDKTMLSGQRIGEKFQDQFLGIAAINISLPGEQYGQKSLNMISSNPQVQYHNDKYISNTSGEDEKTHPGFQQMPEDKEDESEIEEYSCAVTPGGDTDNAIVSLTCATPLLDETISASDYETSLLNDQQNNTGTDTDSDDDFYDTPLFEDDDHDSLLLDGDDRDCLHPEDYDTLQEENDETASPADVFYDVSKENENSMVPQGAPVGSLSVKNKAHCLQDFLMDVEKDELDSGEKIHLNPVGSDKVNGQSLETGSERECTNILEGDESDSLTDYDIVGGKESFTASLKFDDSGSWRGRKEEYVTGQEFHSDTDHLDSMQSEESYGDYIYDSNDQDDDDDDGIDEEGGGIRDENGKPRCQNVAEDMDIQLCASILNENSDENENINTMILLDKMHSCSSLEKQQRVNVVQLASPSENNLVTEKSNLPEYTTEIAGKSKENLLNHEMVLKDVLPPIIKDTESEKTFGPASISHDNNNISSTSELGTDLANTKVKLIQGSELPELTDSVKGKDEYFKNMTPKVDSSLDHIICTEPDLIGKPAEESHLSLIASVTDKDPQGNGSDLIKGRDGKSDILIEDETSIQKMYLGEGEVLVEGLVEEENRHLKLLPGKNTRDSFKLINSQFPFPQITNNEELNQKGSLKKATVTLKDEPNNLQIIVSKSPVQFENLEEIFDTSVSKEISDDITSDITSWEGNTHFEESFTDGPEKELDLFTYLKHCAKNIKAKDVAKPNEDVPSHVLITAPPMKEHLQLGVNNTKEKSTSTQKDSPLNDMIQSNDLCSKESISGGGTEISQFTPESIEATLSILSRKHVEDVGKNDFLQSERCANGLGNDNSSNTLNTDYSFLEINNKKERIEQQLPKEQALSPRSQEKEVQIPELSQVFVEDVKDILKSRLKEGHMNPQEVEEPSACADTKILIQNLIKRITTSQLVNEASTVPSDSQMSDSSGVSPMTNSSELKPESRDDPFCIGNLKSELLLNILKQDQHSQKITGVFELMRELTHMEYDLEKRGITSKVLPLQLENIFYKLLADGYSEKIEHVGDFNQKACSTSEMMEEKPHILGDIKSKEGNYYSPNLETVKEIGLESSTVWASTLPRDEKLKDLCNDFPSHLECTSGSKEMASGDSSTEQFSSELQQCLQHTEKMHEYLTLLQDMKPPLDNQESLDNNLEALKNQLRQLETFELGLAPIAVILRKDMKLAEEFLKSLPSDFPRGHVEELSISHQSLKTAFSSLSNVSSERTKQIMLAIDSEMSKLAVSHEEFLHKLKSFSDWVSEKSKSVKDIEIVNVQDSEYVKKRLEFLKNVLKDLGHTKMQLETTAFDVQFFISEYAQDLSPNQSKQLLRLLNTTQKCFLDVQESVTTQVERLETQLHLEQDLDDQKIVAERQQEYKEKLQGICDLLTQTENRLIGHQEAFMIGDGTVELKKYQSKQEELQKDMQGSAQALAEVVKNTENFLKENGEKLSQEDKALIEQKLNEAKIKCEQLNLKAEQSKKELDKVVTTAIKEETEKVAAVKQLEESKTKIENLLDWLSNVDKDSERAGTKHKQVIEQNGTHFQEGDGKSAIGEEDEVNGNLLETDVDGQVGTTQENLNQQYQKVKAQHEKIISQHQAVIIATQSAQVLLEKQGQYLSPEEKEKLQKNMKELKVHYETALAESEKKMKLTHSLQEELEKFDADYTEFEHWLQQSEQELENLEAGADDINGLMTKLKRQKSFSEDVISHKGDLRYITISGNRVLEAAKSCSKRDGGKVDTSATHREVQRKLDHATDRFRSLYSKCNVLGNNLKDLVDKYQHYEDASCGLLAGLQACEATASKHLSEPIAVDPKNLQRQLEETKALQGQISSQQVAVEKLKKTAEVLLDARGSLLPAKNDIQKTLDDIVGRYEDLSKSVNERNEKLQITLTRSLSVQDGLDEMLDWMGNVESSLKEQGQVPLNSTALQDIISKNIMLEQDIAGRQSSINAMNEKVKKFMETTDPSTASSLQAKMKDLSARFSEASHKHKETLAKMEELKTKVELFENLSEKLQTFLETKTQALTEVDVPGKDVTELSQYMQESTSEFLEHKKHLEVLHSLLKEISSHGLPSDKALVLEKTNNLSKKFKEMEDTIKEKKEAVTSCQEQLDAFQVLVKSLKSWIKETTKKVPIVQPSFGAEDLGKSLEDTKKLQEKWSLKTPEIQKVNNSGISLCNLISAVTTPAKAIAAVKSGGAVLNGEGTATNTEEFWANKGLTSIKKDMTDISHGYEDLGLLLKDKIAELNTKLSKLQKAQEESSAMMQWLQKMNKTATKWQQTPAPTDTEAVKTQVEQNKSFEAELKQNVNKVQELKDKLTELLEENPDTPEAPRWKQMLTEIDSKWQELNQLTIDRQQKLEESSNNLTQFQTVEAQLKQWLVEKELMVSVLGPLSIDPNMLNTQRQQVQILLQEFATRKPQYEQLTAAGQGILSRPGEDPSLRGIVKEQLAAVTQKWDSLTGQLSDRCDWIDQAIVKSTQYQSLLRSLSDKLSDLDNKLSSSLAVSTHPDAMNQQLETAQKMKQEIQQEKKQIKVAQALCEDLSALVKEEYLKAELSRQLEGILKSFKDVEQKAENHVQHLQSACASSHQFQQMSRDFQAWLDTKKEEQNKSHPISAKLDVLESLIKDHKDFSKTLTAQSHMYEKTIAEGENLLLKTQGSEKAALQLQLNTIKTNWDTFNKQVKERENKLKESLEKALKYKEQVETLWPWIDKCQNNLEEIKFCLDPAEGENSIAKLKSLQKEMDQHFGMVELLNNTANSLLSVCEIDKEVVTDENKSLIQKVDMVTEQLHSKKFCLENMTQKFKEFQEVSKESKRQLQCAKEQLDIHDSLGSQAYSNKYLTMLQTQQKSLQALKHQVDLAKRLAQDLVVEASDSKGTSDVLLQVETIAQEHSTLSQQVDEKCSFLETKLQGIGHFQNTIREMFSQFAEFDDELDSMAPVGRDAETLQKQKETIKAFLKKLEALMASNDNANKTCKMMLATEETSPDLVGIKRDLEALSKQCNKLLDRAQAREEQVEGTIKRLEEFYSKLKEFSILLQKAEEHEESQGPVGMETETINQQLNMFKVFQKEEIEPLQGKQQDVNWLGQGLIQSAAKSTSTQGLEHDLDDVNARWKTLNKKVAQRAAQLQEALLHCGRFQDALESLLSWMVDTEELVANQKPPSAEFKVVKAQIQEQKLLQRLLDDRKSTVEVIKREGEKIATTAEPADKVKILKQLSLLDSRWEALLNKAETRNRQLEGISVVAQQFHETLEPLNEWLTTIEKRLVNCEPIGTQASKLEEQIAQHKALEDDIINHNKHLHQAVSIGQSLKVLSSREDKDMVQSKLDFSQVWYIEIQEKSHSRSELLQQALCNAKIFGEDEVELMNWLNEVHDKLSKLSVQDYSTEGLWKQQSELRVLQEDILLRKQNVDQALLNGLELLKQTTGDEVLIIQDKLEAIKARYKDITKLSTDVAKTLEQALQLARRLHSTHEELCTWLDKVEVELLSYETQVLKGEEASQAQMRPKELKKEAKNNKALLDSLNEVSSALLELVPWRAREGLEKMVAEDNERYRLVSDTITQKVEEIDAAILRSQQFDQAADAELSWITETEKKLMSLGDIRLEQDQTSAQLQVQKTFTMEILRHKDIIDDLVKSGHKIMTACSEEEKQSMKKKLDKVLKNYDTICQINSERYLQLERAQSLVNQFWETYEELWPWLTETQSIISQLPAPALEYETLRQQQEEHRQLRELIAEHKPHIDKMNKTGPQLLELSPGEGFSIQEKYVAADTLYSQIKEDVKKRAVALDEAISQSTQFHDKIDQILESLERIVERLRQPPSISAEVEKIKEQISENKNVSVDMEKLQPLYETLKQRGEEMIARSGGTDKDISAKAVQDKLDQMVFIWENIHTLVEEREAKLLDVMELAEKFWCDHMSLIVTIKDTQDFIRDLEDPGIDPSVVKQQQEAAETIREEIDGLQEELDIVINLGSELIAACGEPDKPIVKKSIDELNSAWDSLNKAWKDRIDKLEEAMQAAVQYQDGLQAVFDWVDIAGGKLASMSPIGTDLETVKQQIEELKQFKSEAYQQQIEMERLNHQAELLLKKVTEESDKHTVQDPLMELKLIWDSLEERIINRQHKLEGALLALGQFQHALDELLAWLTHTEGLLSEQKPVGGDPKAIEIELAKHHVLQNDVLAHQSTVEAVNKAGNDLIESSAGEEASNLQNKLEVLNQRWQNVLEKTEQRKQQLDGALRQAKGFHGEIEDLQQWLTDTERHLLASKPLGGLPETAKEQLNVHMEVCAAFEAKEETYKSLMQKGQQMLARCPKSAETNIDQDINNLKEKWESVETKLNERKTKLEEALNLAMEFHNSLQDFINWLTQAEQTLNVASRPSLILDTVLFQIDEHKVFANEVNSHREQIIELDKTGTHLKYFSQKQDVVLIKNLLISVQSRWEKVVQRLVERGRSLDDARKRAKQFHEAWSKLMEWLEESEKSLDSELEIANDPDKIKTQLAQHKEFQKSLGAKHSVYDTTNRTGRSLKEKTSLADDNLKLDDMLSELRDKWDTICGKSVERQNKLEEALLFSGQFTDALQALIDWLYRVEPQLAEDQPVHGDIDLVMNLIDNHKAFQKELGKRTSSVQALKRSARELIEGSRDDSSWVKVQMQELSTRWETVCALSISKQTRLEAALRQAEEFHSVVHALLEWLAEAEQTLRFHGVLPDDEDALRTLIDQHKEFMKKLEEKRAELNKATTMGDTVLAICHPDSITTIKHWITIIRARFEEVLAWAKQHQQRLASALAGLIAKQELLEALLAWLQWAETTLTDKDKEVIPQEIEEVKALIAEHQTFMEEMTRKQPDVDKVTKTYKRRAADPSSLQSHIPVLDKGRAGRKRFPASSLYPSGSQTQIETKNPRVNLLVSKWQQVWLLALERRRKLNDALDRLEELREFANFDFDIWRKKYMRWMNHKKSRVMDFFRRIDKDQDGKITRQEFIDGILSSKFPTSRLEMSAVADIFDRDGDGYIDYYEFVAALHPNKDAYKPITDADKIEDEVTRQVAKCKCAKRFQVEQIGDNKYRFFLGNQFGDSQQLRLVRILRSTVMVRVGGGWMALDEFLVKNDPCRVHHHGSKMLRSESNSSITTTQPTIAKGRTNMELREKFILADGASQGMAAFRPRGRRSRPSSRGASPNRSTSVSSQAAQAASPQVPATTTPKGTPIQGSKLRLPGYLSGKGFHSGEDSGLITTAAARVRTQFADSKKTPSRPGSRAGSKAGSRASSRRGSDASDFDISEIQSVCSDVETVPQTHRPTPRAGSRPSTAKPSKIPTPQRKSPASKLDKSSKR</sequence>
<evidence type="ECO:0000250" key="1"/>
<evidence type="ECO:0000250" key="2">
    <source>
        <dbReference type="UniProtKB" id="Q91ZU6"/>
    </source>
</evidence>
<evidence type="ECO:0000255" key="3">
    <source>
        <dbReference type="PROSITE-ProRule" id="PRU00044"/>
    </source>
</evidence>
<evidence type="ECO:0000255" key="4">
    <source>
        <dbReference type="PROSITE-ProRule" id="PRU00192"/>
    </source>
</evidence>
<evidence type="ECO:0000255" key="5">
    <source>
        <dbReference type="PROSITE-ProRule" id="PRU00448"/>
    </source>
</evidence>
<evidence type="ECO:0000255" key="6">
    <source>
        <dbReference type="PROSITE-ProRule" id="PRU00792"/>
    </source>
</evidence>
<evidence type="ECO:0000256" key="7">
    <source>
        <dbReference type="SAM" id="MobiDB-lite"/>
    </source>
</evidence>
<evidence type="ECO:0000269" key="8">
    <source>
    </source>
</evidence>
<evidence type="ECO:0000269" key="9">
    <source>
    </source>
</evidence>
<evidence type="ECO:0000269" key="10">
    <source>
    </source>
</evidence>
<evidence type="ECO:0000269" key="11">
    <source>
    </source>
</evidence>
<evidence type="ECO:0000269" key="12">
    <source>
    </source>
</evidence>
<evidence type="ECO:0000269" key="13">
    <source>
    </source>
</evidence>
<evidence type="ECO:0000269" key="14">
    <source>
    </source>
</evidence>
<evidence type="ECO:0000269" key="15">
    <source>
    </source>
</evidence>
<evidence type="ECO:0000269" key="16">
    <source>
    </source>
</evidence>
<evidence type="ECO:0000269" key="17">
    <source>
    </source>
</evidence>
<evidence type="ECO:0000269" key="18">
    <source>
    </source>
</evidence>
<evidence type="ECO:0000269" key="19">
    <source>
    </source>
</evidence>
<evidence type="ECO:0000269" key="20">
    <source>
    </source>
</evidence>
<evidence type="ECO:0000269" key="21">
    <source>
    </source>
</evidence>
<evidence type="ECO:0000303" key="22">
    <source>
    </source>
</evidence>
<evidence type="ECO:0000303" key="23">
    <source>
    </source>
</evidence>
<evidence type="ECO:0000303" key="24">
    <source>
    </source>
</evidence>
<evidence type="ECO:0000303" key="25">
    <source>
    </source>
</evidence>
<evidence type="ECO:0000303" key="26">
    <source>
    </source>
</evidence>
<evidence type="ECO:0000303" key="27">
    <source>
    </source>
</evidence>
<evidence type="ECO:0000303" key="28">
    <source>
    </source>
</evidence>
<evidence type="ECO:0000303" key="29">
    <source>
    </source>
</evidence>
<evidence type="ECO:0000303" key="30">
    <source>
    </source>
</evidence>
<evidence type="ECO:0000303" key="31">
    <source>
    </source>
</evidence>
<evidence type="ECO:0000305" key="32"/>
<evidence type="ECO:0000312" key="33">
    <source>
        <dbReference type="HGNC" id="HGNC:1090"/>
    </source>
</evidence>
<evidence type="ECO:0007744" key="34">
    <source>
    </source>
</evidence>
<evidence type="ECO:0007744" key="35">
    <source>
    </source>
</evidence>
<evidence type="ECO:0007744" key="36">
    <source>
    </source>
</evidence>
<evidence type="ECO:0007744" key="37">
    <source>
    </source>
</evidence>
<feature type="chain" id="PRO_0000078138" description="Dystonin">
    <location>
        <begin position="1"/>
        <end position="7570"/>
    </location>
</feature>
<feature type="domain" description="Calponin-homology (CH) 1" evidence="3">
    <location>
        <begin position="35"/>
        <end position="138"/>
    </location>
</feature>
<feature type="domain" description="Calponin-homology (CH) 2" evidence="3">
    <location>
        <begin position="151"/>
        <end position="255"/>
    </location>
</feature>
<feature type="repeat" description="Spectrin 1">
    <location>
        <begin position="602"/>
        <end position="699"/>
    </location>
</feature>
<feature type="repeat" description="Spectrin 2">
    <location>
        <begin position="701"/>
        <end position="802"/>
    </location>
</feature>
<feature type="domain" description="SH3" evidence="4">
    <location>
        <begin position="887"/>
        <end position="944"/>
    </location>
</feature>
<feature type="repeat" description="Spectrin 3">
    <location>
        <begin position="1293"/>
        <end position="1422"/>
    </location>
</feature>
<feature type="repeat" description="Spectrin 4">
    <location>
        <begin position="1440"/>
        <end position="1540"/>
    </location>
</feature>
<feature type="repeat" description="Plectin 1">
    <location>
        <begin position="1584"/>
        <end position="1626"/>
    </location>
</feature>
<feature type="repeat" description="Plectin 2">
    <location>
        <begin position="1660"/>
        <end position="1703"/>
    </location>
</feature>
<feature type="repeat" description="Plectin 3">
    <location>
        <begin position="1774"/>
        <end position="1817"/>
    </location>
</feature>
<feature type="repeat" description="Plectin 4">
    <location>
        <begin position="1818"/>
        <end position="1855"/>
    </location>
</feature>
<feature type="repeat" description="Plectin 5">
    <location>
        <begin position="1856"/>
        <end position="1891"/>
    </location>
</feature>
<feature type="repeat" description="Spectrin 5">
    <location>
        <begin position="3395"/>
        <end position="3501"/>
    </location>
</feature>
<feature type="repeat" description="Spectrin 6">
    <location>
        <begin position="3643"/>
        <end position="3752"/>
    </location>
</feature>
<feature type="repeat" description="Spectrin 7">
    <location>
        <begin position="3926"/>
        <end position="4040"/>
    </location>
</feature>
<feature type="repeat" description="Spectrin 8">
    <location>
        <begin position="4047"/>
        <end position="4153"/>
    </location>
</feature>
<feature type="repeat" description="Spectrin 9">
    <location>
        <begin position="4160"/>
        <end position="4259"/>
    </location>
</feature>
<feature type="repeat" description="Spectrin 10">
    <location>
        <begin position="4269"/>
        <end position="4368"/>
    </location>
</feature>
<feature type="repeat" description="Spectrin 11">
    <location>
        <begin position="4516"/>
        <end position="4621"/>
    </location>
</feature>
<feature type="repeat" description="Spectrin 12">
    <location>
        <begin position="4628"/>
        <end position="4732"/>
    </location>
</feature>
<feature type="repeat" description="Spectrin 13">
    <location>
        <begin position="4742"/>
        <end position="4842"/>
    </location>
</feature>
<feature type="repeat" description="Spectrin 14">
    <location>
        <begin position="4849"/>
        <end position="4951"/>
    </location>
</feature>
<feature type="repeat" description="Spectrin 15">
    <location>
        <begin position="4958"/>
        <end position="5058"/>
    </location>
</feature>
<feature type="repeat" description="Spectrin 16">
    <location>
        <begin position="5068"/>
        <end position="5167"/>
    </location>
</feature>
<feature type="repeat" description="Spectrin 17">
    <location>
        <begin position="5174"/>
        <end position="5277"/>
    </location>
</feature>
<feature type="repeat" description="Spectrin 18">
    <location>
        <begin position="5284"/>
        <end position="5388"/>
    </location>
</feature>
<feature type="repeat" description="Spectrin 19">
    <location>
        <begin position="5395"/>
        <end position="5497"/>
    </location>
</feature>
<feature type="repeat" description="Spectrin 20">
    <location>
        <begin position="5504"/>
        <end position="5715"/>
    </location>
</feature>
<feature type="repeat" description="Spectrin 21">
    <location>
        <begin position="5831"/>
        <end position="5933"/>
    </location>
</feature>
<feature type="repeat" description="Spectrin 22">
    <location>
        <begin position="5941"/>
        <end position="6041"/>
    </location>
</feature>
<feature type="repeat" description="Spectrin 23">
    <location>
        <begin position="6048"/>
        <end position="6154"/>
    </location>
</feature>
<feature type="repeat" description="Spectrin 24">
    <location>
        <begin position="6161"/>
        <end position="6263"/>
    </location>
</feature>
<feature type="repeat" description="Spectrin 25">
    <location>
        <begin position="6270"/>
        <end position="6373"/>
    </location>
</feature>
<feature type="repeat" description="Spectrin 26">
    <location>
        <begin position="6380"/>
        <end position="6482"/>
    </location>
</feature>
<feature type="repeat" description="Spectrin 27">
    <location>
        <begin position="6489"/>
        <end position="6591"/>
    </location>
</feature>
<feature type="repeat" description="Spectrin 28">
    <location>
        <begin position="6598"/>
        <end position="6700"/>
    </location>
</feature>
<feature type="repeat" description="Spectrin 29">
    <location>
        <begin position="6707"/>
        <end position="6810"/>
    </location>
</feature>
<feature type="repeat" description="Spectrin 30">
    <location>
        <begin position="6817"/>
        <end position="6918"/>
    </location>
</feature>
<feature type="repeat" description="Spectrin 31">
    <location>
        <begin position="6925"/>
        <end position="7027"/>
    </location>
</feature>
<feature type="repeat" description="Spectrin 32">
    <location>
        <begin position="7037"/>
        <end position="7167"/>
    </location>
</feature>
<feature type="domain" description="EF-hand 1" evidence="5">
    <location>
        <begin position="7197"/>
        <end position="7232"/>
    </location>
</feature>
<feature type="domain" description="EF-hand 2" evidence="5">
    <location>
        <begin position="7233"/>
        <end position="7268"/>
    </location>
</feature>
<feature type="domain" description="GAR" evidence="6">
    <location>
        <begin position="7273"/>
        <end position="7351"/>
    </location>
</feature>
<feature type="region of interest" description="Actin-binding">
    <location>
        <begin position="35"/>
        <end position="252"/>
    </location>
</feature>
<feature type="region of interest" description="Disordered" evidence="7">
    <location>
        <begin position="2317"/>
        <end position="2346"/>
    </location>
</feature>
<feature type="region of interest" description="Disordered" evidence="7">
    <location>
        <begin position="2383"/>
        <end position="2441"/>
    </location>
</feature>
<feature type="region of interest" description="Disordered" evidence="7">
    <location>
        <begin position="2585"/>
        <end position="2616"/>
    </location>
</feature>
<feature type="region of interest" description="Disordered" evidence="7">
    <location>
        <begin position="3190"/>
        <end position="3221"/>
    </location>
</feature>
<feature type="region of interest" description="Disordered" evidence="7">
    <location>
        <begin position="7358"/>
        <end position="7379"/>
    </location>
</feature>
<feature type="region of interest" description="Disordered" evidence="7">
    <location>
        <begin position="7395"/>
        <end position="7452"/>
    </location>
</feature>
<feature type="region of interest" description="Disordered" evidence="7">
    <location>
        <begin position="7481"/>
        <end position="7570"/>
    </location>
</feature>
<feature type="short sequence motif" description="Nuclear localization signal; in isoform 6" evidence="1">
    <location>
        <begin position="1383"/>
        <end position="1389"/>
    </location>
</feature>
<feature type="short sequence motif" description="Microtubule tip localization signal">
    <location>
        <begin position="7550"/>
        <end position="7553"/>
    </location>
</feature>
<feature type="compositionally biased region" description="Acidic residues" evidence="7">
    <location>
        <begin position="2336"/>
        <end position="2345"/>
    </location>
</feature>
<feature type="compositionally biased region" description="Low complexity" evidence="7">
    <location>
        <begin position="2385"/>
        <end position="2394"/>
    </location>
</feature>
<feature type="compositionally biased region" description="Acidic residues" evidence="7">
    <location>
        <begin position="2395"/>
        <end position="2412"/>
    </location>
</feature>
<feature type="compositionally biased region" description="Acidic residues" evidence="7">
    <location>
        <begin position="2430"/>
        <end position="2439"/>
    </location>
</feature>
<feature type="compositionally biased region" description="Acidic residues" evidence="7">
    <location>
        <begin position="2591"/>
        <end position="2605"/>
    </location>
</feature>
<feature type="compositionally biased region" description="Low complexity" evidence="7">
    <location>
        <begin position="3192"/>
        <end position="3209"/>
    </location>
</feature>
<feature type="compositionally biased region" description="Polar residues" evidence="7">
    <location>
        <begin position="7362"/>
        <end position="7374"/>
    </location>
</feature>
<feature type="compositionally biased region" description="Low complexity" evidence="7">
    <location>
        <begin position="7411"/>
        <end position="7441"/>
    </location>
</feature>
<feature type="compositionally biased region" description="Low complexity" evidence="7">
    <location>
        <begin position="7490"/>
        <end position="7504"/>
    </location>
</feature>
<feature type="compositionally biased region" description="Polar residues" evidence="7">
    <location>
        <begin position="7519"/>
        <end position="7535"/>
    </location>
</feature>
<feature type="binding site" evidence="5">
    <location>
        <position position="7210"/>
    </location>
    <ligand>
        <name>Ca(2+)</name>
        <dbReference type="ChEBI" id="CHEBI:29108"/>
        <label>1</label>
    </ligand>
</feature>
<feature type="binding site" evidence="5">
    <location>
        <position position="7212"/>
    </location>
    <ligand>
        <name>Ca(2+)</name>
        <dbReference type="ChEBI" id="CHEBI:29108"/>
        <label>1</label>
    </ligand>
</feature>
<feature type="binding site" evidence="5">
    <location>
        <position position="7214"/>
    </location>
    <ligand>
        <name>Ca(2+)</name>
        <dbReference type="ChEBI" id="CHEBI:29108"/>
        <label>1</label>
    </ligand>
</feature>
<feature type="binding site" evidence="5">
    <location>
        <position position="7216"/>
    </location>
    <ligand>
        <name>Ca(2+)</name>
        <dbReference type="ChEBI" id="CHEBI:29108"/>
        <label>1</label>
    </ligand>
</feature>
<feature type="binding site" evidence="5">
    <location>
        <position position="7221"/>
    </location>
    <ligand>
        <name>Ca(2+)</name>
        <dbReference type="ChEBI" id="CHEBI:29108"/>
        <label>1</label>
    </ligand>
</feature>
<feature type="binding site" evidence="5">
    <location>
        <position position="7246"/>
    </location>
    <ligand>
        <name>Ca(2+)</name>
        <dbReference type="ChEBI" id="CHEBI:29108"/>
        <label>2</label>
    </ligand>
</feature>
<feature type="binding site" evidence="5">
    <location>
        <position position="7248"/>
    </location>
    <ligand>
        <name>Ca(2+)</name>
        <dbReference type="ChEBI" id="CHEBI:29108"/>
        <label>2</label>
    </ligand>
</feature>
<feature type="binding site" evidence="5">
    <location>
        <position position="7250"/>
    </location>
    <ligand>
        <name>Ca(2+)</name>
        <dbReference type="ChEBI" id="CHEBI:29108"/>
        <label>2</label>
    </ligand>
</feature>
<feature type="binding site" evidence="5">
    <location>
        <position position="7252"/>
    </location>
    <ligand>
        <name>Ca(2+)</name>
        <dbReference type="ChEBI" id="CHEBI:29108"/>
        <label>2</label>
    </ligand>
</feature>
<feature type="binding site" evidence="5">
    <location>
        <position position="7257"/>
    </location>
    <ligand>
        <name>Ca(2+)</name>
        <dbReference type="ChEBI" id="CHEBI:29108"/>
        <label>2</label>
    </ligand>
</feature>
<feature type="modified residue" description="Phosphoserine" evidence="2">
    <location>
        <position position="236"/>
    </location>
</feature>
<feature type="modified residue" description="Phosphoserine" evidence="2">
    <location>
        <position position="237"/>
    </location>
</feature>
<feature type="modified residue" description="Phosphoserine" evidence="2">
    <location>
        <position position="1382"/>
    </location>
</feature>
<feature type="modified residue" description="Phosphoserine" evidence="2">
    <location>
        <position position="2229"/>
    </location>
</feature>
<feature type="modified residue" description="Phosphoserine" evidence="35">
    <location>
        <position position="2919"/>
    </location>
</feature>
<feature type="modified residue" description="Phosphoserine" evidence="36 37">
    <location>
        <position position="3968"/>
    </location>
</feature>
<feature type="modified residue" description="Phosphoserine" evidence="2">
    <location>
        <position position="4749"/>
    </location>
</feature>
<feature type="modified residue" description="Phosphoserine" evidence="34">
    <location>
        <position position="7432"/>
    </location>
</feature>
<feature type="modified residue" description="Phosphoserine" evidence="2">
    <location>
        <position position="7510"/>
    </location>
</feature>
<feature type="modified residue" description="Phosphoserine" evidence="2">
    <location>
        <position position="7513"/>
    </location>
</feature>
<feature type="modified residue" description="Phosphoserine" evidence="2">
    <location>
        <position position="7525"/>
    </location>
</feature>
<feature type="cross-link" description="Glycyl lysine isopeptide (Lys-Gly) (interchain with G-Cter in ubiquitin)">
    <location>
        <position position="5470"/>
    </location>
</feature>
<feature type="splice variant" id="VSP_041524" description="In isoform 5." evidence="26">
    <location>
        <begin position="1"/>
        <end position="3896"/>
    </location>
</feature>
<feature type="splice variant" id="VSP_041525" description="In isoform 2, isoform 3 and isoform 4." evidence="23 27 28 29 31">
    <original>MAGYLSPAAYLYVEEQEYLQAYEDVLERYKDERDKVQKKTFTKWINQHLMKVRKHVNDLYEDLRDGHNLISLLEVLSGDTLPREKGRMRFHRLQNVQIALDYLKRRQVKLVNIRNDDITDGNPKLTLGLIWTIILHFQISDIHVTGESEDMSAKERLLLWTQQATEGYAGIRCENFTTCWRDGKLFNAIIHKYRPDLIDMNTVAVQSNLANLEHAFYVAEKIGVIRLLDPEDVDVSSPDEKSVITYVSSLYDAFPKVPEGGEGIGANDVEVKWIEYQNMVNYLIQWIRHHVTTMSERTFPNNPVELKALYNQYLQFKETEIPPKETEKSKIKRLYKLLEIWIEFGRIKLLQGYHPNDIEKEWGKLIIAMLEREKALRPEVE</original>
    <variation>MHSSSYSYRSSDSVFSNTTSTRTSLDSNENLLLVHCGPTLINSCISFGSESFDGH</variation>
    <location>
        <begin position="1"/>
        <end position="381"/>
    </location>
</feature>
<feature type="splice variant" id="VSP_041526" description="In isoform 7." evidence="22">
    <original>MAGYLSPAAYLYVEEQEYLQAYEDVLERYKDERDKVQKKTFTKWINQHLMKVRKHVNDLYEDLRDGHNLISLLEVLSGDTLPREKGRMRFHRLQNVQIALDYLKRRQVKLVNIRNDDITDGNPKLTLGLIWTIILHFQ</original>
    <variation>MQHSIFSLKKKRCHSLYTSMSSVSKDTDGNE</variation>
    <location>
        <begin position="1"/>
        <end position="138"/>
    </location>
</feature>
<feature type="splice variant" id="VSP_041527" description="In isoform 8." evidence="25">
    <original>MAGYLSPAAYLYVEEQEYLQAYEDVLERYKDERDKVQKKTFTKWINQHLMKVRKHVNDLYEDLRDGHNLISLLEVLSGDTLPREKGRMRFHRLQNVQIALDYLKRRQVKLVNIRNDDITDGNPKLTLGLIWTIILHFQ</original>
    <variation>MGNVCGCVRAEKEEQYVDPAKTPLNPEKYSPGRKYFRRKPIKKTGGDKESVGANNENEGKKKSSSQPSKEQPAPLSRGLVQQESVTLNSALGDGIQQKKTEVVADSVKQKLLPSAVSSWSDCVNTSPAKDSETEVKVSELDERISEKDSTPYCAKRKKHLDDVNTSEITFQEKTDVFSFRKAASLSSIPSGIERSLEKGGFPEDPPKSYSSIQEKQNTERFCPHATQHFQFKKKRCHSLYTSMSSVSKDTDGNE</variation>
    <location>
        <begin position="1"/>
        <end position="138"/>
    </location>
</feature>
<feature type="splice variant" id="VSP_041528" description="In isoform 6." evidence="30">
    <original>MAGYLSPAAYLYVEEQEYLQAYEDVLERYK</original>
    <variation>MIAAAFLVLLRPYSIQCALFLLLLLLGTIATIVFFCCWHRKLQKGRHPMKSVFSGRSRSRDAVLRSHHFRSEGFRASPRHLRRRVAAAAAARLEEVKPVVEVHHQSEQETSVRKRRIKKSSRVQPEFYHSVQGASIRRPSSGNASYRCSMSSSADFSDEDDFSQKSGSASPAPGDTLPWNLPKHERSKRKIQGGSVLDPAERAVLRIA</variation>
    <location>
        <begin position="1"/>
        <end position="30"/>
    </location>
</feature>
<feature type="splice variant" id="VSP_041529" description="In isoform 6." evidence="30">
    <location>
        <begin position="47"/>
        <end position="7570"/>
    </location>
</feature>
<feature type="splice variant" id="VSP_041530" description="In isoform 7." evidence="22">
    <location>
        <begin position="189"/>
        <end position="7570"/>
    </location>
</feature>
<feature type="splice variant" id="VSP_041531" description="In isoform 8." evidence="25">
    <original>AYRAAMQTQWSW</original>
    <variation>VKLESVMVLVEY</variation>
    <location>
        <begin position="778"/>
        <end position="789"/>
    </location>
</feature>
<feature type="splice variant" id="VSP_041532" description="In isoform 8." evidence="25">
    <location>
        <begin position="790"/>
        <end position="7570"/>
    </location>
</feature>
<feature type="splice variant" id="VSP_041533" description="In isoform 3." evidence="27 28 29">
    <original>K</original>
    <variation>IKRCKETSEHGAYSDLLQRQKATVLENSKLTGKISELERMVAELKKQKSRVEEELPKVREAAENELRKQQRNVEDISLQKIRAESEAKQYRRELETIVREKEAAERELERVRQLTIEAEAKRAAVEENLLNFRNQLEENTFTRRTLEDHLKRKDLSLNDLEQQKNKLMEELRRKRDNEEELLKLIKQMEKDLAFQKQVAEKQLKEKQKIELEARRKITEIQYTCRENALPVCPITQATSCRAVTGLQQEHDKQKAEELKQQVDELTAANRKAEQDMRELTYELNALQLEKTSSEEKARLLKDKLDETNNTLRCLKLELERKDQAEKGYSQQLRELGRQLNQTTGKAEEAMQEASDLKKIKRNYQLELESLNHEKGKLQREVDRITRAHAVAEKNIQHLNSQIHSFRDEKELERLQICQRKSDHLKEQFEKSHEQLLQNIKAEKENNDKIQRLNEELEKSNECAEMLKQKVEELTRQNNETKLMMQRIQAESENIVLEKQTIQQRCEALKIQADGFKDQLRSTNEHLHKQTKTEQDFQRKIKCLEEDLAKSQNLVSEFKQKCDQQNIIIQNTKKEVRNLNAELNASKEEKRRGEQKVQLQQAQVQELNNRLKKVQDELHLKTIEEQMTHRKMVLFQEESGKFKQSAEEFRKKMEKLMESKVITENDISGIRLDFVSLQQENSRAQENAKLCETNIKELERQLQQYREQMQQGQHMEANHYQKCQKLEDELIAQKREVENLKQKMDQQIKEHEHQLVLLQCEIQKKSTAKDCTFKPDFEMTVKECQHSGELSSRNTGHLHPTPRSPLLRWTQEPQPLEEKWQHRVVEQIPKEVQFQPPGAPLEKEKSQQCYSEYFSQTSTELQITFDETNPITRLSEIEKIRDQALNNSRPPVRYQDNACEMELVKVLTPLEIAKNKQYDMHTEVTTLKQEKNPVPSAEEWMLEGCRASGGLKKGDFLKKGLEPETFQNFDGDHACSVRDDEFKFQGLRHTVTARQLVEAKLLDMRTIEQLRLGLKTVEEVQKTLNKFLTKATSIAGLYLESTKEKISFASAAERIIIDKMVALAFLEAQAATGFIIDPISGQTYSVEDAVLKGVVDPEFRIRLLEAEKAAVGYSYSSKTLSVFQAMENRMLDRQKGKHILEAQIASGGVIDPVRGIRVPPEIALQQGLLNNAILQFLHEPSSNTRVFPNPNNKQALYYSELLRMCVFDVESQCFLFPFGERNISNLNVKKTHRISVVDTKTGSELTVYEAFQRNLIEKSIYLELSGQQYQWKEAMFFESYGHSSHMLTDTKTGLHFNINEAIEQGTIDKALVKKYQEGLITLTELADSLLSRLVPKKDLHSPVAGYWLTASGERISVLKASRRNLVDRITALRCLEAQVSTGGIIDPLTGKKYRVAEALHRGLVDEGFAQQLRQCELVITGIGHPITNKMMSVVEAVNANIINKEMGIRCLEFQYLTGGLIEPQVHSRLSIEEALQVGIIDVLIATKLKDQKSYVRNIICPQTKRKLTYKEALEKADFDFHTGLKLLEVSEPLMTGISSLYYSS</variation>
    <location>
        <position position="1433"/>
    </location>
</feature>
<feature type="splice variant" id="VSP_041534" description="In isoform 3." evidence="27 28 29">
    <location>
        <begin position="1434"/>
        <end position="7570"/>
    </location>
</feature>
<feature type="splice variant" id="VSP_041535" description="In isoform 2." evidence="23 31">
    <location>
        <begin position="1550"/>
        <end position="3635"/>
    </location>
</feature>
<feature type="splice variant" id="VSP_058835" description="In isoform 9.">
    <location>
        <begin position="1551"/>
        <end position="3636"/>
    </location>
</feature>
<feature type="splice variant" id="VSP_041536" description="In isoform 4." evidence="23">
    <location>
        <begin position="3387"/>
        <end position="7570"/>
    </location>
</feature>
<feature type="splice variant" id="VSP_041537" description="In isoform 5." evidence="26">
    <original>GQVPLNSTALQDIISKN</original>
    <variation>DVGTGYCRSSEQYKCHE</variation>
    <location>
        <begin position="4184"/>
        <end position="4200"/>
    </location>
</feature>
<feature type="splice variant" id="VSP_041538" description="In isoform 5." evidence="26">
    <location>
        <begin position="4201"/>
        <end position="7570"/>
    </location>
</feature>
<feature type="splice variant" id="VSP_058836" description="In isoform 9.">
    <location>
        <begin position="5546"/>
        <end position="5654"/>
    </location>
</feature>
<feature type="splice variant" id="VSP_041539" description="In isoform 2." evidence="23 31">
    <location>
        <begin position="7352"/>
        <end position="7375"/>
    </location>
</feature>
<feature type="splice variant" id="VSP_041540" description="In isoform 2." evidence="23 31">
    <original>K</original>
    <variation>KILHPLTRNYGKPWLTNSKMSTPCKAAECSDFPVPSAE</variation>
    <location>
        <position position="7442"/>
    </location>
</feature>
<feature type="sequence variant" id="VAR_063045" description="In dbSNP:rs35014998.">
    <original>N</original>
    <variation>K</variation>
    <location>
        <position position="1319"/>
    </location>
</feature>
<feature type="sequence variant" id="VAR_063046" description="In dbSNP:rs16888053.">
    <original>Q</original>
    <variation>R</variation>
    <location>
        <position position="2332"/>
    </location>
</feature>
<feature type="sequence variant" id="VAR_063047" description="In dbSNP:rs4712138.">
    <original>Q</original>
    <variation>R</variation>
    <location>
        <position position="3720"/>
    </location>
</feature>
<feature type="sequence variant" id="VAR_063048" description="In dbSNP:rs4715631." evidence="13">
    <original>T</original>
    <variation>A</variation>
    <location>
        <position position="5138"/>
    </location>
</feature>
<feature type="mutagenesis site" description="Loss of interaction with MAPRE1 and association with microtubule growing ends." evidence="15">
    <original>K</original>
    <variation>Q</variation>
    <location>
        <position position="7548"/>
    </location>
</feature>
<feature type="mutagenesis site" description="Loss of association with microtubule growing ends." evidence="15">
    <original>S</original>
    <variation>A</variation>
    <variation>N</variation>
    <location>
        <position position="7550"/>
    </location>
</feature>
<feature type="mutagenesis site" description="Loss of interaction with MAPRE1 and association with the growing microtubule plus ends; when associated with N-7553." evidence="15">
    <original>I</original>
    <variation>N</variation>
    <location>
        <position position="7552"/>
    </location>
</feature>
<feature type="mutagenesis site" description="Loss of interaction with MAPRE1 and association with the growing microtubule plus ends; when associated with N-7552." evidence="15">
    <original>P</original>
    <variation>N</variation>
    <location>
        <position position="7553"/>
    </location>
</feature>
<feature type="mutagenesis site" description="Loss of interaction with MAPRE1 and association with the growing microtubule plus ends.">
    <original>R</original>
    <variation>N</variation>
    <location>
        <position position="7557"/>
    </location>
</feature>
<feature type="mutagenesis site" description="Loss of interaction with MAPRE1 and association with the growing microtubule plus ends.">
    <original>K</original>
    <variation>N</variation>
    <location>
        <position position="7558"/>
    </location>
</feature>
<feature type="sequence conflict" description="In Ref. 4; BAH12207." evidence="32" ref="4">
    <original>P</original>
    <variation>A</variation>
    <location>
        <position position="573"/>
    </location>
</feature>
<feature type="sequence conflict" description="In Ref. 1; M69225 and 3; AAL62061/AAL62062." evidence="32" ref="1 3">
    <original>V</original>
    <variation>G</variation>
    <location>
        <position position="1177"/>
    </location>
</feature>
<feature type="sequence conflict" description="In Ref. 3; AAL62061." evidence="32" ref="3">
    <original>K</original>
    <variation>E</variation>
    <location>
        <position position="1363"/>
    </location>
</feature>
<feature type="sequence conflict" description="In Ref. 4; BAC04449." evidence="32" ref="4">
    <original>R</original>
    <variation>H</variation>
    <location>
        <position position="4703"/>
    </location>
</feature>
<feature type="sequence conflict" description="In Ref. 4; BAC04449." evidence="32" ref="4">
    <original>N</original>
    <variation>S</variation>
    <location>
        <position position="4935"/>
    </location>
</feature>
<feature type="sequence conflict" description="In Ref. 3; AAL62061." evidence="32" ref="3">
    <original>E</original>
    <variation>G</variation>
    <location>
        <position position="5030"/>
    </location>
</feature>
<feature type="sequence conflict" description="In Ref. 3; AAL62061." evidence="32" ref="3">
    <original>Q</original>
    <variation>R</variation>
    <location>
        <position position="5177"/>
    </location>
</feature>
<feature type="sequence conflict" description="In Ref. 4; BAB70870." evidence="32" ref="4">
    <original>M</original>
    <variation>I</variation>
    <location>
        <position position="5225"/>
    </location>
</feature>
<feature type="sequence conflict" description="In Ref. 3; AAL62061." evidence="32" ref="3">
    <original>K</original>
    <variation>R</variation>
    <location>
        <position position="5299"/>
    </location>
</feature>
<feature type="sequence conflict" description="In Ref. 3; AAL62061." evidence="32" ref="3">
    <original>I</original>
    <variation>V</variation>
    <location>
        <position position="5823"/>
    </location>
</feature>
<feature type="sequence conflict" description="In Ref. 3; AAL62061." evidence="32" ref="3">
    <original>K</original>
    <variation>R</variation>
    <location>
        <position position="5882"/>
    </location>
</feature>
<feature type="sequence conflict" description="In Ref. 3; AAL62061." evidence="32" ref="3">
    <original>L</original>
    <variation>S</variation>
    <location>
        <position position="5986"/>
    </location>
</feature>
<feature type="sequence conflict" description="In Ref. 4; BAC04848." evidence="32" ref="4">
    <original>K</original>
    <variation>E</variation>
    <location>
        <position position="6080"/>
    </location>
</feature>
<feature type="sequence conflict" description="In Ref. 3; AAL62061." evidence="32" ref="3">
    <original>D</original>
    <variation>G</variation>
    <location>
        <position position="6186"/>
    </location>
</feature>
<feature type="sequence conflict" description="In Ref. 3; AAL62061." evidence="32" ref="3">
    <original>A</original>
    <variation>G</variation>
    <location>
        <position position="6440"/>
    </location>
</feature>
<feature type="modified residue" description="Phosphoserine" evidence="32">
    <location sequence="Q03001-3">
        <position position="1565"/>
    </location>
</feature>
<feature type="sequence conflict" description="In Ref. 1; M69225." evidence="32" ref="1">
    <original>R</original>
    <variation>T</variation>
    <location sequence="Q03001-3">
        <position position="1644"/>
    </location>
</feature>
<feature type="sequence conflict" description="In Ref. 13; CAA41528." evidence="32" ref="13">
    <original>G</original>
    <variation>R</variation>
    <location sequence="Q03001-3">
        <position position="1943"/>
    </location>
</feature>
<feature type="sequence conflict" description="In Ref. 1; M69225." evidence="32" ref="1">
    <original>S</original>
    <variation>T</variation>
    <location sequence="Q03001-3">
        <position position="2364"/>
    </location>
</feature>
<feature type="sequence conflict" description="In Ref. 1; M69225." evidence="32" ref="1">
    <original>G</original>
    <variation>V</variation>
    <location sequence="Q03001-3">
        <position position="2495"/>
    </location>
</feature>
<feature type="sequence conflict" description="In Ref. 1; M69225." evidence="32" ref="1">
    <original>N</original>
    <variation>K</variation>
    <location sequence="Q03001-3">
        <position position="2543"/>
    </location>
</feature>
<feature type="sequence conflict" description="In Ref. 1; M69225." evidence="32" ref="1">
    <original>A</original>
    <variation>P</variation>
    <location sequence="Q03001-3">
        <position position="2621"/>
    </location>
</feature>
<feature type="modified residue" description="Phosphoserine" evidence="36">
    <location sequence="Q03001-11">
        <position position="135"/>
    </location>
</feature>
<feature type="sequence conflict" description="In Ref. 7; AAC50244." evidence="32" ref="7">
    <original>P</original>
    <variation>L</variation>
    <location sequence="Q03001-11">
        <position position="48"/>
    </location>
</feature>
<feature type="modified residue" description="Phosphoserine" evidence="37">
    <location sequence="Q03001-13">
        <position position="184"/>
    </location>
</feature>